<comment type="function">
    <text evidence="1 2 11 21 35 36 37 40 49">Acts in the cytoplasm to initiate and regulate protein synthesis and is required in the nucleus for export of a subset of mRNAs from the nucleus to the cytoplasm which promotes processes such as RNA capping, processing and splicing (PubMed:11606200, PubMed:22578813, PubMed:22684010, PubMed:24335285, PubMed:29987188). Component of the protein complex eIF4F, which is involved in the recognition of the mRNA cap, ATP-dependent unwinding of 5'-terminal secondary structure and recruitment of mRNA to the ribosome (By similarity). This protein recognizes and binds the 7-methylguanosine (m7G)-containing mRNA cap during an early step in the initiation of protein synthesis and facilitates ribosome binding by inducing the unwinding of the mRNAs secondary structures (PubMed:16271312, PubMed:22578813). Together with EIF4G1, antagonizes the scanning promoted by EIF1-EIF4G1 and is required for TISU translation, a process where the TISU element recognition makes scanning unnecessary (PubMed:29987188). In addition to its role in translation initiation, also acts as a regulator of translation and stability in the cytoplasm (PubMed:24335285). Component of the CYFIP1-EIF4E-FMR1 complex which binds to the mRNA cap and mediates translational repression: in the complex, EIF4E mediates the binding to the mRNA cap (By similarity). Component of a multiprotein complex that sequesters and represses translation of proneurogenic factors during neurogenesis (By similarity). In P-bodies, component of a complex that mediates the storage of translationally inactive mRNAs in the cytoplasm and prevents their degradation (PubMed:24335285). May play an important role in spermatogenesis through translational regulation of stage-specific mRNAs during germ cell development (By similarity). As well as its roles in translation, also involved in mRNA nucleocytoplasmic transport (By similarity). Its role in mRNA export from the nucleus to the cytoplasm relies on its ability to bind the m7G cap of RNAs and on the presence of the 50-nucleotide EIF4E sensitivity element (4ESE) in the 3'UTR of sensitive transcripts (By similarity). Interaction with the 4ESE is mediated by LRPPRC which binds simultaneously to both EIF4E and the 4ESE, thereby acting as a platform for assembly for the RNA export complex (By similarity). EIF4E-dependent mRNA export is independent of ongoing protein or RNA synthesis and is also NFX1-independent but is XPO1-dependent with LRPPRC interacting with XPO1 to form an EIF4E-dependent mRNA export complex (By similarity). Alters the composition of the cytoplasmic face of the nuclear pore to promote RNA export by reducing RANBP2 expression, relocalizing nucleoporin NUP214 and increasing expression of RANBP1 and RNA export factors DDX19 and GLE1 (By similarity). Promotes the nuclear export of cyclin CCND1 mRNA (By similarity). Promotes the nuclear export of NOS2/iNOS mRNA (PubMed:23471078). Promotes the nuclear export of MDM2 mRNA (PubMed:22684010). Promotes the export of additional mRNAs, including others involved in the cell cycle (By similarity). In the nucleus, binds to capped splice factor-encoding mRNAs and stimulates their nuclear export to enhance splice factor production by increasing their cytoplasmic availability to the translation machinery (By similarity). May also regulate splicing through interaction with the spliceosome in an RNA and m7G cap-dependent manner (By similarity). Also binds to some pre-mRNAs and may play a role in their recruitment to the spliceosome (By similarity). Promotes steady-state capping of a subset of coding and non-coding RNAs by mediating nuclear export of capping machinery mRNAs including RNMT, RNGTT and RAMAC to enhance their translation (By similarity). Stimulates mRNA 3'-end processing by promoting the expression of several core cleavage complex factors required for mRNA cleavage and polyadenylation, and may also have a direct effect through its interaction with the CPSF3 cleavage enzyme (By similarity). Rescues cells from apoptosis by promoting activation of serine/threonine-protein kinase AKT1 through mRNA export of NBS1 which potentiates AKT1 phosphorylation and also through mRNA export of AKT1 effectors, allowing for increased production of these proteins (By similarity).</text>
</comment>
<comment type="subunit">
    <text evidence="1 5 7 9 10 12 14 15 16 20 21 22 25 26 27 31 32 33 34 38 39 40 41 42 44 45 46 47 48 50 58">eIF4F is a multi-subunit complex, the composition of which varies with external and internal environmental conditions (PubMed:11408474, PubMed:11879179, PubMed:16271312, PubMed:17631896). It is composed of at least EIF4A, EIF4E and EIF4G1/EIF4G3 (PubMed:11408474, PubMed:11879179, PubMed:12975586, PubMed:29987188, PubMed:8521827). EIF4E is also known to interact with other partners (PubMed:11408474, PubMed:11879179, PubMed:12975586, PubMed:8521827). Interacts with EIF4ENIF1/4E-T; promotes recruitment to P-bodies and import into the nucleus (PubMed:10856257, PubMed:16157702, PubMed:23991149, PubMed:24335285, PubMed:28487484). Hypophosphorylated EIF4EBP1, EIF4EBP2 and EIF4EBP3 compete with EIF4G1/EIF4G3 to interact with EIF4E; insulin stimulated MAP-kinase (MAPK1 and MAPK3) phosphorylation of EIF4EBP1 causes dissociation of the complex allowing EIF4G1/EIF4G3 to bind and consequent initiation of translation (PubMed:16271312, PubMed:21661078, PubMed:24207126, PubMed:25533957, PubMed:25702871, PubMed:8521827). Interacts mutually exclusive with EIF4A1 or EIF4A2 (PubMed:11408474). Interacts with NGDN and PIWIL2 (By similarity). Component of the CYFIP1-EIF4E-FMR1 complex composed of CYFIP, EIF4E and FMR1 (By similarity). Interacts directly with CYFIP1 (By similarity). Interacts with CLOCK (By similarity). Binds to MKNK2 in nucleus (PubMed:12897141). Interacts with LIMD1, WTIP and AJUBA (PubMed:20616046). Interacts with APOBEC3G in an RNA-dependent manner (PubMed:16699599). Interacts with LARP1 (PubMed:20430826). Interacts with METTL3 (PubMed:27117702). Interacts with RBM24; this interaction prevents EIF4E from binding to p53/TP53 mRNA and inhibits the assembly of translation initiation complex (PubMed:29358667). Interacts with DDX3X; interaction is direct and in an RNA-independent manner; this interaction enhances EIF4E cap-binding ability and is required for the repression of cap-dependent translation and the increase of IRES-mediated translation (PubMed:17667941, PubMed:21883093, PubMed:28733330). DDX3X competes with EIF4G1 for interaction with EIF4E (PubMed:17667941, PubMed:21883093). Interacts with EIF4G1; which in a mutual exclusive interaction associates either with EIF1 or with EIF4E on a common binding site (PubMed:29987188). Interacts with BTG4 and CNOT7 (By similarity). Interacts with LRPPRC (via N-terminus); the interaction promotes association of EIF4E with 4ESE-containing mRNAs (PubMed:19262567, PubMed:28325843). Interacts with mRNA cleavage enzyme CPSF3 and its cofactor CPSF1 (PubMed:31042468). Interacts (via RING-type zinc finger) with PML; the interaction results in conformational changes of both interacting proteins and reduces EIF4E affinity for the 5' m7G cap of mRNA, thus reducing EIF4E-mediated mRNA nuclear export (PubMed:11500381, PubMed:11575918). Interacts with homeobox protein HHEX/PRH; the interaction inhibits EIF4E-mediated mRNA nuclear export (PubMed:12554669). Interacts with homeobox protein HOXA9; the interaction positively regulates EIF4E-mediated mRNA nuclear export (By similarity). Interacts with homeobox protein EMX2 (By similarity).</text>
</comment>
<comment type="subunit">
    <text evidence="30">(Microbial infection) Interacts with Lassa virus Z protein.</text>
</comment>
<comment type="subunit">
    <text evidence="10">(Microbial infection) Interacts with Lymphocytic choriomeningitis virus (LCMV) Z protein (via RING-type zinc finger); the interaction results in conformational changes of both interacting proteins and reduces EIF4E affinity for the m7G mRNA cap structure.</text>
</comment>
<comment type="subunit">
    <text evidence="52">(Microbial infection) Interacts (via cap-binding region) with potato virus Y VPg; this interaction mediates the translation of the VPg-viral RNA conjugates and interferes with the cellular EIF4E-dependent mRNA export and translation.</text>
</comment>
<comment type="interaction">
    <interactant intactId="EBI-73440">
        <id>P06730</id>
    </interactant>
    <interactant intactId="EBI-448680">
        <id>O14965</id>
        <label>AURKA</label>
    </interactant>
    <organismsDiffer>false</organismsDiffer>
    <experiments>2</experiments>
</comment>
<comment type="interaction">
    <interactant intactId="EBI-73440">
        <id>P06730</id>
    </interactant>
    <interactant intactId="EBI-74090">
        <id>Q13541</id>
        <label>EIF4EBP1</label>
    </interactant>
    <organismsDiffer>false</organismsDiffer>
    <experiments>31</experiments>
</comment>
<comment type="interaction">
    <interactant intactId="EBI-73440">
        <id>P06730</id>
    </interactant>
    <interactant intactId="EBI-935137">
        <id>Q13542</id>
        <label>EIF4EBP2</label>
    </interactant>
    <organismsDiffer>false</organismsDiffer>
    <experiments>16</experiments>
</comment>
<comment type="interaction">
    <interactant intactId="EBI-73440">
        <id>P06730</id>
    </interactant>
    <interactant intactId="EBI-746950">
        <id>O60516</id>
        <label>EIF4EBP3</label>
    </interactant>
    <organismsDiffer>false</organismsDiffer>
    <experiments>10</experiments>
</comment>
<comment type="interaction">
    <interactant intactId="EBI-73440">
        <id>P06730</id>
    </interactant>
    <interactant intactId="EBI-301024">
        <id>Q9NRA8</id>
        <label>EIF4ENIF1</label>
    </interactant>
    <organismsDiffer>false</organismsDiffer>
    <experiments>14</experiments>
</comment>
<comment type="interaction">
    <interactant intactId="EBI-73440">
        <id>P06730</id>
    </interactant>
    <interactant intactId="EBI-73711">
        <id>Q04637</id>
        <label>EIF4G1</label>
    </interactant>
    <organismsDiffer>false</organismsDiffer>
    <experiments>13</experiments>
</comment>
<comment type="interaction">
    <interactant intactId="EBI-73440">
        <id>P06730</id>
    </interactant>
    <interactant intactId="EBI-15841003">
        <id>O43432-1</id>
        <label>EIF4G3</label>
    </interactant>
    <organismsDiffer>false</organismsDiffer>
    <experiments>2</experiments>
</comment>
<comment type="interaction">
    <interactant intactId="EBI-73440">
        <id>P06730</id>
    </interactant>
    <interactant intactId="EBI-399831">
        <id>Q04743</id>
        <label>EMX2</label>
    </interactant>
    <organismsDiffer>false</organismsDiffer>
    <experiments>4</experiments>
</comment>
<comment type="interaction">
    <interactant intactId="EBI-73440">
        <id>P06730</id>
    </interactant>
    <interactant intactId="EBI-443630">
        <id>Q8TEQ6</id>
        <label>GEMIN5</label>
    </interactant>
    <organismsDiffer>false</organismsDiffer>
    <experiments>3</experiments>
</comment>
<comment type="interaction">
    <interactant intactId="EBI-73440">
        <id>P06730</id>
    </interactant>
    <interactant intactId="EBI-2556193">
        <id>Q63ZY3</id>
        <label>KANK2</label>
    </interactant>
    <organismsDiffer>false</organismsDiffer>
    <experiments>7</experiments>
</comment>
<comment type="interaction">
    <interactant intactId="EBI-73440">
        <id>P06730</id>
    </interactant>
    <interactant intactId="EBI-1050853">
        <id>P42704</id>
        <label>LRPPRC</label>
    </interactant>
    <organismsDiffer>false</organismsDiffer>
    <experiments>6</experiments>
</comment>
<comment type="interaction">
    <interactant intactId="EBI-73440">
        <id>P06730</id>
    </interactant>
    <interactant intactId="EBI-81531">
        <id>P11940</id>
        <label>PABPC1</label>
    </interactant>
    <organismsDiffer>false</organismsDiffer>
    <experiments>5</experiments>
</comment>
<comment type="interaction">
    <interactant intactId="EBI-73440">
        <id>P06730</id>
    </interactant>
    <interactant intactId="EBI-712311">
        <id>P67775</id>
        <label>PPP2CA</label>
    </interactant>
    <organismsDiffer>false</organismsDiffer>
    <experiments>2</experiments>
</comment>
<comment type="interaction">
    <interactant intactId="EBI-73440">
        <id>P06730</id>
    </interactant>
    <interactant intactId="EBI-80140">
        <id>P63165</id>
        <label>SUMO1</label>
    </interactant>
    <organismsDiffer>false</organismsDiffer>
    <experiments>5</experiments>
</comment>
<comment type="interaction">
    <interactant intactId="EBI-73440">
        <id>P06730</id>
    </interactant>
    <interactant intactId="EBI-743494">
        <id>P48775</id>
        <label>TDO2</label>
    </interactant>
    <organismsDiffer>false</organismsDiffer>
    <experiments>4</experiments>
</comment>
<comment type="interaction">
    <interactant intactId="EBI-73440">
        <id>P06730</id>
    </interactant>
    <interactant intactId="EBI-719493">
        <id>P14373</id>
        <label>TRIM27</label>
    </interactant>
    <organismsDiffer>false</organismsDiffer>
    <experiments>5</experiments>
</comment>
<comment type="interaction">
    <interactant intactId="EBI-73440">
        <id>P06730</id>
    </interactant>
    <interactant intactId="EBI-746004">
        <id>Q5T124</id>
        <label>UBXN11</label>
    </interactant>
    <organismsDiffer>false</organismsDiffer>
    <experiments>3</experiments>
</comment>
<comment type="interaction">
    <interactant intactId="EBI-73440">
        <id>P06730</id>
    </interactant>
    <interactant intactId="EBI-16204405">
        <id>O70552</id>
        <label>Btg4</label>
    </interactant>
    <organismsDiffer>true</organismsDiffer>
    <experiments>4</experiments>
</comment>
<comment type="interaction">
    <interactant intactId="EBI-73440">
        <id>P06730</id>
    </interactant>
    <interactant intactId="EBI-2104739">
        <id>Q60809</id>
        <label>Cnot7</label>
    </interactant>
    <organismsDiffer>true</organismsDiffer>
    <experiments>2</experiments>
</comment>
<comment type="interaction">
    <interactant intactId="EBI-73440">
        <id>P06730</id>
    </interactant>
    <interactant intactId="EBI-15840965">
        <id>O73557</id>
        <label>Z</label>
    </interactant>
    <organismsDiffer>true</organismsDiffer>
    <experiments>3</experiments>
</comment>
<comment type="interaction">
    <interactant intactId="EBI-32715456">
        <id>P06730-1</id>
    </interactant>
    <interactant intactId="EBI-74090">
        <id>Q13541</id>
        <label>EIF4EBP1</label>
    </interactant>
    <organismsDiffer>false</organismsDiffer>
    <experiments>3</experiments>
</comment>
<comment type="interaction">
    <interactant intactId="EBI-32715456">
        <id>P06730-1</id>
    </interactant>
    <interactant intactId="EBI-301024">
        <id>Q9NRA8</id>
        <label>EIF4ENIF1</label>
    </interactant>
    <organismsDiffer>false</organismsDiffer>
    <experiments>2</experiments>
</comment>
<comment type="subcellular location">
    <subcellularLocation>
        <location evidence="20 32 40 43">Cytoplasm</location>
        <location evidence="20 32 40 43">P-body</location>
    </subcellularLocation>
    <subcellularLocation>
        <location evidence="5 14 17 19 34 37 53">Cytoplasm</location>
    </subcellularLocation>
    <subcellularLocation>
        <location evidence="34">Cytoplasm</location>
        <location evidence="34">Stress granule</location>
    </subcellularLocation>
    <subcellularLocation>
        <location evidence="5 8 17 37 53">Nucleus</location>
    </subcellularLocation>
    <subcellularLocation>
        <location evidence="4">Nucleus speckle</location>
    </subcellularLocation>
    <subcellularLocation>
        <location evidence="14 19">Nucleus</location>
        <location evidence="14 19">Nuclear body</location>
    </subcellularLocation>
    <text evidence="1 5 20 40 43">Interaction with EIF4ENIF1/4E-T is required for localization to processing bodies (P-bodies) (PubMed:16157702, PubMed:24335285, PubMed:25923732). Imported in the nucleus via interaction with EIF4ENIF1/4E-T via a piggy-back mechanism (PubMed:10856257). Sequestered in the nucleus by EIF4EBP1 and EIF4EBP2 (By similarity).</text>
</comment>
<comment type="alternative products">
    <event type="alternative splicing"/>
    <isoform>
        <id>P06730-1</id>
        <name>1</name>
        <sequence type="displayed"/>
    </isoform>
    <isoform>
        <id>P06730-2</id>
        <name>2</name>
        <sequence type="described" ref="VSP_042014"/>
    </isoform>
    <isoform>
        <id>P06730-3</id>
        <name>3</name>
        <sequence type="described" ref="VSP_043591"/>
    </isoform>
</comment>
<comment type="PTM">
    <text evidence="1 6 11 13 51 54 55 56 57 59">Phosphorylation increases the ability of the protein to bind to mRNA caps and to form the eIF4F complex (PubMed:11154262, PubMed:3112145, PubMed:7590282, PubMed:7665584, PubMed:7782323, PubMed:8505316, PubMed:9878069). Phosphorylation also enhances its mRNA transport function (By similarity). Phosphorylation at Ser-209 is not essential for protein synthesis (PubMed:11606200, PubMed:12138083).</text>
</comment>
<comment type="mass spectrometry"/>
<comment type="mass spectrometry"/>
<comment type="disease" evidence="29">
    <disease id="DI-03649">
        <name>Autism 19</name>
        <acronym>AUTS19</acronym>
        <description>A complex multifactorial, pervasive developmental disorder characterized by impairments in reciprocal social interaction and communication, restricted and stereotyped patterns of interests and activities, and the presence of developmental abnormalities by 3 years of age. Most individuals with autism also manifest moderate intellectual disability.</description>
        <dbReference type="MIM" id="615091"/>
    </disease>
    <text evidence="29">Disease susceptibility is associated with variants affecting the gene represented in this entry. A heterozygous single-nucleotide insertion has been found in families affected by autism. The variant results in increased promoter activity and is involved in disease pathogenesis through EIF4E deregulation (PubMed:19556253).</text>
</comment>
<comment type="disease">
    <text evidence="29">A chromosomal aberration involving EIF4E has been found in a patient with classic autism. Translocation t(45)(q23q31.3). The breakpoint on chromosome 4 is located 56 kb downstream of EIF4E (PubMed:19556253).</text>
</comment>
<comment type="miscellaneous">
    <text evidence="18 28">The antiviral drug ribavirin relocalizes nuclear EIF4E to the cytoplasm and reduces the elevated EIF4E levels found in acute myeloid leukemia patients, suggesting its potential use as a therapeutic agent (PubMed:19433856). Ribavirin suppresses EIF4E-mediated oncogenic transformation by binding to EIF4E at the functional site used by the m7G mRNA cap and competing with the mRNA cap for binding to EIF4E which leads to relocalization of the majority of EIF4E to the cytoplasm and inhibition of nucleocytoplasmic mRNA transport (PubMed:15601771).</text>
</comment>
<comment type="similarity">
    <text evidence="65">Belongs to the eukaryotic initiation factor 4E family.</text>
</comment>
<comment type="caution">
    <text evidence="66 67">Was originally thought to be phosphorylated on Ser-53 (PubMed:3112145); this was later shown to be wrong (PubMed:7665584).</text>
</comment>
<comment type="online information" name="Atlas of Genetics and Cytogenetics in Oncology and Haematology">
    <link uri="https://atlasgeneticsoncology.org/gene/40431/EIF4E"/>
</comment>
<proteinExistence type="evidence at protein level"/>
<reference key="1">
    <citation type="journal article" date="1987" name="Proc. Natl. Acad. Sci. U.S.A.">
        <title>Amino acid sequence of the mRNA cap-binding protein from human tissues.</title>
        <authorList>
            <person name="Rychlik W."/>
            <person name="Domier L.L."/>
            <person name="Gardner P.R."/>
            <person name="Hellmann G.M."/>
            <person name="Rhoads R.E."/>
        </authorList>
    </citation>
    <scope>NUCLEOTIDE SEQUENCE [MRNA] (ISOFORM 1)</scope>
    <source>
        <tissue>Placenta</tissue>
    </source>
</reference>
<reference key="2">
    <citation type="journal article" date="1992" name="Proc. Natl. Acad. Sci. U.S.A.">
        <authorList>
            <person name="Rychlik W."/>
            <person name="Domier L.L."/>
            <person name="Gardner P.R."/>
            <person name="Hellmann G.M."/>
            <person name="Rhoads R.E."/>
        </authorList>
    </citation>
    <scope>ERRATUM OF PUBMED:3469651</scope>
    <scope>SEQUENCE REVISION TO 108 AND 189</scope>
</reference>
<reference key="3">
    <citation type="journal article" date="2004" name="Nat. Genet.">
        <title>Complete sequencing and characterization of 21,243 full-length human cDNAs.</title>
        <authorList>
            <person name="Ota T."/>
            <person name="Suzuki Y."/>
            <person name="Nishikawa T."/>
            <person name="Otsuki T."/>
            <person name="Sugiyama T."/>
            <person name="Irie R."/>
            <person name="Wakamatsu A."/>
            <person name="Hayashi K."/>
            <person name="Sato H."/>
            <person name="Nagai K."/>
            <person name="Kimura K."/>
            <person name="Makita H."/>
            <person name="Sekine M."/>
            <person name="Obayashi M."/>
            <person name="Nishi T."/>
            <person name="Shibahara T."/>
            <person name="Tanaka T."/>
            <person name="Ishii S."/>
            <person name="Yamamoto J."/>
            <person name="Saito K."/>
            <person name="Kawai Y."/>
            <person name="Isono Y."/>
            <person name="Nakamura Y."/>
            <person name="Nagahari K."/>
            <person name="Murakami K."/>
            <person name="Yasuda T."/>
            <person name="Iwayanagi T."/>
            <person name="Wagatsuma M."/>
            <person name="Shiratori A."/>
            <person name="Sudo H."/>
            <person name="Hosoiri T."/>
            <person name="Kaku Y."/>
            <person name="Kodaira H."/>
            <person name="Kondo H."/>
            <person name="Sugawara M."/>
            <person name="Takahashi M."/>
            <person name="Kanda K."/>
            <person name="Yokoi T."/>
            <person name="Furuya T."/>
            <person name="Kikkawa E."/>
            <person name="Omura Y."/>
            <person name="Abe K."/>
            <person name="Kamihara K."/>
            <person name="Katsuta N."/>
            <person name="Sato K."/>
            <person name="Tanikawa M."/>
            <person name="Yamazaki M."/>
            <person name="Ninomiya K."/>
            <person name="Ishibashi T."/>
            <person name="Yamashita H."/>
            <person name="Murakawa K."/>
            <person name="Fujimori K."/>
            <person name="Tanai H."/>
            <person name="Kimata M."/>
            <person name="Watanabe M."/>
            <person name="Hiraoka S."/>
            <person name="Chiba Y."/>
            <person name="Ishida S."/>
            <person name="Ono Y."/>
            <person name="Takiguchi S."/>
            <person name="Watanabe S."/>
            <person name="Yosida M."/>
            <person name="Hotuta T."/>
            <person name="Kusano J."/>
            <person name="Kanehori K."/>
            <person name="Takahashi-Fujii A."/>
            <person name="Hara H."/>
            <person name="Tanase T.-O."/>
            <person name="Nomura Y."/>
            <person name="Togiya S."/>
            <person name="Komai F."/>
            <person name="Hara R."/>
            <person name="Takeuchi K."/>
            <person name="Arita M."/>
            <person name="Imose N."/>
            <person name="Musashino K."/>
            <person name="Yuuki H."/>
            <person name="Oshima A."/>
            <person name="Sasaki N."/>
            <person name="Aotsuka S."/>
            <person name="Yoshikawa Y."/>
            <person name="Matsunawa H."/>
            <person name="Ichihara T."/>
            <person name="Shiohata N."/>
            <person name="Sano S."/>
            <person name="Moriya S."/>
            <person name="Momiyama H."/>
            <person name="Satoh N."/>
            <person name="Takami S."/>
            <person name="Terashima Y."/>
            <person name="Suzuki O."/>
            <person name="Nakagawa S."/>
            <person name="Senoh A."/>
            <person name="Mizoguchi H."/>
            <person name="Goto Y."/>
            <person name="Shimizu F."/>
            <person name="Wakebe H."/>
            <person name="Hishigaki H."/>
            <person name="Watanabe T."/>
            <person name="Sugiyama A."/>
            <person name="Takemoto M."/>
            <person name="Kawakami B."/>
            <person name="Yamazaki M."/>
            <person name="Watanabe K."/>
            <person name="Kumagai A."/>
            <person name="Itakura S."/>
            <person name="Fukuzumi Y."/>
            <person name="Fujimori Y."/>
            <person name="Komiyama M."/>
            <person name="Tashiro H."/>
            <person name="Tanigami A."/>
            <person name="Fujiwara T."/>
            <person name="Ono T."/>
            <person name="Yamada K."/>
            <person name="Fujii Y."/>
            <person name="Ozaki K."/>
            <person name="Hirao M."/>
            <person name="Ohmori Y."/>
            <person name="Kawabata A."/>
            <person name="Hikiji T."/>
            <person name="Kobatake N."/>
            <person name="Inagaki H."/>
            <person name="Ikema Y."/>
            <person name="Okamoto S."/>
            <person name="Okitani R."/>
            <person name="Kawakami T."/>
            <person name="Noguchi S."/>
            <person name="Itoh T."/>
            <person name="Shigeta K."/>
            <person name="Senba T."/>
            <person name="Matsumura K."/>
            <person name="Nakajima Y."/>
            <person name="Mizuno T."/>
            <person name="Morinaga M."/>
            <person name="Sasaki M."/>
            <person name="Togashi T."/>
            <person name="Oyama M."/>
            <person name="Hata H."/>
            <person name="Watanabe M."/>
            <person name="Komatsu T."/>
            <person name="Mizushima-Sugano J."/>
            <person name="Satoh T."/>
            <person name="Shirai Y."/>
            <person name="Takahashi Y."/>
            <person name="Nakagawa K."/>
            <person name="Okumura K."/>
            <person name="Nagase T."/>
            <person name="Nomura N."/>
            <person name="Kikuchi H."/>
            <person name="Masuho Y."/>
            <person name="Yamashita R."/>
            <person name="Nakai K."/>
            <person name="Yada T."/>
            <person name="Nakamura Y."/>
            <person name="Ohara O."/>
            <person name="Isogai T."/>
            <person name="Sugano S."/>
        </authorList>
    </citation>
    <scope>NUCLEOTIDE SEQUENCE [LARGE SCALE MRNA] (ISOFORM 3)</scope>
    <source>
        <tissue>Small intestine</tissue>
    </source>
</reference>
<reference key="4">
    <citation type="journal article" date="2005" name="Nature">
        <title>Generation and annotation of the DNA sequences of human chromosomes 2 and 4.</title>
        <authorList>
            <person name="Hillier L.W."/>
            <person name="Graves T.A."/>
            <person name="Fulton R.S."/>
            <person name="Fulton L.A."/>
            <person name="Pepin K.H."/>
            <person name="Minx P."/>
            <person name="Wagner-McPherson C."/>
            <person name="Layman D."/>
            <person name="Wylie K."/>
            <person name="Sekhon M."/>
            <person name="Becker M.C."/>
            <person name="Fewell G.A."/>
            <person name="Delehaunty K.D."/>
            <person name="Miner T.L."/>
            <person name="Nash W.E."/>
            <person name="Kremitzki C."/>
            <person name="Oddy L."/>
            <person name="Du H."/>
            <person name="Sun H."/>
            <person name="Bradshaw-Cordum H."/>
            <person name="Ali J."/>
            <person name="Carter J."/>
            <person name="Cordes M."/>
            <person name="Harris A."/>
            <person name="Isak A."/>
            <person name="van Brunt A."/>
            <person name="Nguyen C."/>
            <person name="Du F."/>
            <person name="Courtney L."/>
            <person name="Kalicki J."/>
            <person name="Ozersky P."/>
            <person name="Abbott S."/>
            <person name="Armstrong J."/>
            <person name="Belter E.A."/>
            <person name="Caruso L."/>
            <person name="Cedroni M."/>
            <person name="Cotton M."/>
            <person name="Davidson T."/>
            <person name="Desai A."/>
            <person name="Elliott G."/>
            <person name="Erb T."/>
            <person name="Fronick C."/>
            <person name="Gaige T."/>
            <person name="Haakenson W."/>
            <person name="Haglund K."/>
            <person name="Holmes A."/>
            <person name="Harkins R."/>
            <person name="Kim K."/>
            <person name="Kruchowski S.S."/>
            <person name="Strong C.M."/>
            <person name="Grewal N."/>
            <person name="Goyea E."/>
            <person name="Hou S."/>
            <person name="Levy A."/>
            <person name="Martinka S."/>
            <person name="Mead K."/>
            <person name="McLellan M.D."/>
            <person name="Meyer R."/>
            <person name="Randall-Maher J."/>
            <person name="Tomlinson C."/>
            <person name="Dauphin-Kohlberg S."/>
            <person name="Kozlowicz-Reilly A."/>
            <person name="Shah N."/>
            <person name="Swearengen-Shahid S."/>
            <person name="Snider J."/>
            <person name="Strong J.T."/>
            <person name="Thompson J."/>
            <person name="Yoakum M."/>
            <person name="Leonard S."/>
            <person name="Pearman C."/>
            <person name="Trani L."/>
            <person name="Radionenko M."/>
            <person name="Waligorski J.E."/>
            <person name="Wang C."/>
            <person name="Rock S.M."/>
            <person name="Tin-Wollam A.-M."/>
            <person name="Maupin R."/>
            <person name="Latreille P."/>
            <person name="Wendl M.C."/>
            <person name="Yang S.-P."/>
            <person name="Pohl C."/>
            <person name="Wallis J.W."/>
            <person name="Spieth J."/>
            <person name="Bieri T.A."/>
            <person name="Berkowicz N."/>
            <person name="Nelson J.O."/>
            <person name="Osborne J."/>
            <person name="Ding L."/>
            <person name="Meyer R."/>
            <person name="Sabo A."/>
            <person name="Shotland Y."/>
            <person name="Sinha P."/>
            <person name="Wohldmann P.E."/>
            <person name="Cook L.L."/>
            <person name="Hickenbotham M.T."/>
            <person name="Eldred J."/>
            <person name="Williams D."/>
            <person name="Jones T.A."/>
            <person name="She X."/>
            <person name="Ciccarelli F.D."/>
            <person name="Izaurralde E."/>
            <person name="Taylor J."/>
            <person name="Schmutz J."/>
            <person name="Myers R.M."/>
            <person name="Cox D.R."/>
            <person name="Huang X."/>
            <person name="McPherson J.D."/>
            <person name="Mardis E.R."/>
            <person name="Clifton S.W."/>
            <person name="Warren W.C."/>
            <person name="Chinwalla A.T."/>
            <person name="Eddy S.R."/>
            <person name="Marra M.A."/>
            <person name="Ovcharenko I."/>
            <person name="Furey T.S."/>
            <person name="Miller W."/>
            <person name="Eichler E.E."/>
            <person name="Bork P."/>
            <person name="Suyama M."/>
            <person name="Torrents D."/>
            <person name="Waterston R.H."/>
            <person name="Wilson R.K."/>
        </authorList>
    </citation>
    <scope>NUCLEOTIDE SEQUENCE [LARGE SCALE GENOMIC DNA]</scope>
</reference>
<reference key="5">
    <citation type="journal article" date="2004" name="Genome Res.">
        <title>The status, quality, and expansion of the NIH full-length cDNA project: the Mammalian Gene Collection (MGC).</title>
        <authorList>
            <consortium name="The MGC Project Team"/>
        </authorList>
    </citation>
    <scope>NUCLEOTIDE SEQUENCE [LARGE SCALE MRNA] (ISOFORM 1)</scope>
    <source>
        <tissue>Brain</tissue>
        <tissue>Testis</tissue>
    </source>
</reference>
<reference key="6">
    <citation type="journal article" date="2005" name="Mamm. Genome">
        <title>Transcriptome analysis of human gastric cancer.</title>
        <authorList>
            <person name="Oh J.H."/>
            <person name="Yang J.O."/>
            <person name="Hahn Y."/>
            <person name="Kim M.R."/>
            <person name="Byun S.S."/>
            <person name="Jeon Y.J."/>
            <person name="Kim J.M."/>
            <person name="Song K.S."/>
            <person name="Noh S.M."/>
            <person name="Kim S."/>
            <person name="Yoo H.S."/>
            <person name="Kim Y.S."/>
            <person name="Kim N.S."/>
        </authorList>
    </citation>
    <scope>NUCLEOTIDE SEQUENCE [MRNA] OF 1-214 (ISOFORM 2)</scope>
    <source>
        <tissue>Myeloma</tissue>
    </source>
</reference>
<reference key="7">
    <citation type="journal article" date="1991" name="J. Biol. Chem.">
        <title>Phosphorylation of the proto-oncogene product eukaryotic initiation factor 4E is a common cellular response to tumor necrosis factor.</title>
        <authorList>
            <person name="Marino M.W."/>
            <person name="Feld L.J."/>
            <person name="Jaffe E.A."/>
            <person name="Pfeffer L.M."/>
            <person name="Han Y.-M."/>
            <person name="Donner D.B."/>
        </authorList>
    </citation>
    <scope>PARTIAL PROTEIN SEQUENCE</scope>
</reference>
<reference key="8">
    <citation type="journal article" date="1991" name="FEBS Lett.">
        <title>Combination of Trp and Glu residues for recognition of mRNA cap structure. Analysis of m7G base recognition site of human cap binding protein (IF-4E) by site-directed mutagenesis.</title>
        <authorList>
            <person name="Ueda H."/>
            <person name="Iyo H."/>
            <person name="Doi M."/>
            <person name="Inoue M."/>
            <person name="Ishida T."/>
            <person name="Morioka H."/>
            <person name="Tanaka T."/>
            <person name="Nishikawa S."/>
            <person name="Uesugi S."/>
        </authorList>
    </citation>
    <scope>MUTAGENESIS OF TRP-102; GLU-103; ASP-104 AND GLU-105</scope>
</reference>
<reference key="9">
    <citation type="journal article" date="1987" name="J. Biol. Chem.">
        <title>Phosphorylation site of eukaryotic initiation factor 4E.</title>
        <authorList>
            <person name="Rychlik W."/>
            <person name="Russ M.A."/>
            <person name="Rhoads R.E."/>
        </authorList>
    </citation>
    <scope>PHOSPHORYLATION</scope>
</reference>
<reference key="10">
    <citation type="journal article" date="1992" name="Proc. Natl. Acad. Sci. U.S.A.">
        <title>A fraction of the mRNA 5' cap-binding protein, eukaryotic initiation factor 4E, localizes to the nucleus.</title>
        <authorList>
            <person name="Lejbkowicz F."/>
            <person name="Goyer C."/>
            <person name="Darveau A."/>
            <person name="Neron S."/>
            <person name="Lemieux R."/>
            <person name="Sonenberg N."/>
        </authorList>
    </citation>
    <scope>SUBCELLULAR LOCATION</scope>
</reference>
<reference key="11">
    <citation type="journal article" date="1993" name="J. Biol. Chem.">
        <title>Characterization of wild-type and Ser53 mutant eukaryotic initiation factor 4E overexpression in mammalian cells.</title>
        <authorList>
            <person name="Kaufman R.J."/>
            <person name="Murtha-Riel P."/>
            <person name="Pittman D.D."/>
            <person name="Davies M.V."/>
        </authorList>
    </citation>
    <scope>PHOSPHORYLATION</scope>
    <scope>MUTAGENESIS OF SER-53</scope>
</reference>
<reference key="12">
    <citation type="journal article" date="1995" name="Gene">
        <title>Role of Ser-53 phosphorylation in the activity of human translation initiation factor eIF-4E in mammalian and yeast cells.</title>
        <authorList>
            <person name="Zhang Y."/>
            <person name="Klein H.L."/>
            <person name="Schneider R.J."/>
        </authorList>
    </citation>
    <scope>PHOSPHORYLATION</scope>
    <scope>MUTAGENESIS OF SER-53</scope>
</reference>
<reference key="13">
    <citation type="journal article" date="1995" name="J. Biol. Chem.">
        <title>Phosphorylation of eukaryotic protein synthesis initiation factor 4E at Ser-209.</title>
        <authorList>
            <person name="Joshi B."/>
            <person name="Cai A.L."/>
            <person name="Keiper B.D."/>
            <person name="Minich W.B."/>
            <person name="Mendez R."/>
            <person name="Beach C.M."/>
            <person name="Stepinski J."/>
            <person name="Stolarski R."/>
            <person name="Darzynkiewicz E."/>
            <person name="Rhoads R.E."/>
        </authorList>
    </citation>
    <scope>PHOSPHORYLATION AT SER-209</scope>
</reference>
<reference key="14">
    <citation type="journal article" date="1995" name="J. Biol. Chem.">
        <title>Serine 209, not serine 53, is the major site of phosphorylation in initiation factor eIF-4E in serum-treated Chinese hamster ovary cells.</title>
        <authorList>
            <person name="Flynn A."/>
            <person name="Proud C.G."/>
        </authorList>
    </citation>
    <scope>PHOSPHORYLATION AT SER-209</scope>
</reference>
<reference key="15">
    <citation type="journal article" date="1995" name="EMBO J.">
        <title>Repression of cap-dependent translation by 4E-binding protein 1: competition with p220 for binding to eukaryotic initiation factor-4E.</title>
        <authorList>
            <person name="Haghighat A."/>
            <person name="Mader S."/>
            <person name="Pause A."/>
            <person name="Sonenberg N."/>
        </authorList>
    </citation>
    <scope>INTERACTION WITH EIF4G AND EIF4EBP1</scope>
</reference>
<reference key="16">
    <citation type="journal article" date="2000" name="EMBO J.">
        <title>A novel shuttling protein, 4E-T, mediates the nuclear import of the mRNA 5' cap-binding protein, eIF4E.</title>
        <authorList>
            <person name="Dostie J."/>
            <person name="Ferraiuolo M."/>
            <person name="Pause A."/>
            <person name="Adam S.A."/>
            <person name="Sonenberg N."/>
        </authorList>
    </citation>
    <scope>SUBCELLULAR LOCATION</scope>
    <scope>INTERACTION WITH EIF4ENIF1</scope>
    <source>
        <tissue>Fetal brain</tissue>
        <tissue>Placenta</tissue>
    </source>
</reference>
<reference key="17">
    <citation type="journal article" date="1999" name="EMBO J.">
        <title>Human eukaryotic translation initiation factor 4G (eIF4G) recruits mnk1 to phosphorylate eIF4E.</title>
        <authorList>
            <person name="Pyronnet S."/>
            <person name="Imataka H."/>
            <person name="Gingras A.-C."/>
            <person name="Fukunaga R."/>
            <person name="Hunter T."/>
            <person name="Sonenberg N."/>
        </authorList>
    </citation>
    <scope>PHOSPHORYLATION BY MKNK1</scope>
</reference>
<reference key="18">
    <citation type="journal article" date="2000" name="J. Cell Biol.">
        <title>Nuclear eukaryotic initiation factor 4E (eIF4E) colocalizes with splicing factors in speckles.</title>
        <authorList>
            <person name="Dostie J."/>
            <person name="Lejbkowicz F."/>
            <person name="Sonenberg N."/>
        </authorList>
    </citation>
    <scope>SUBCELLULAR LOCATION</scope>
</reference>
<reference key="19">
    <citation type="journal article" date="2001" name="EMBO J.">
        <title>PML RING suppresses oncogenic transformation by reducing the affinity of eIF4E for mRNA.</title>
        <authorList>
            <person name="Cohen N."/>
            <person name="Sharma M."/>
            <person name="Kentsis A."/>
            <person name="Perez J.M."/>
            <person name="Strudwick S."/>
            <person name="Borden K.L."/>
        </authorList>
    </citation>
    <scope>INTERACTION WITH PML</scope>
</reference>
<reference key="20">
    <citation type="journal article" date="2001" name="Eur. J. Biochem.">
        <title>Phosphorylation of eukaryotic initiation factor 4E (eIF4E) at Ser209 is not required for protein synthesis in vitro and in vivo.</title>
        <authorList>
            <person name="McKendrick L."/>
            <person name="Morley S.J."/>
            <person name="Pain V.M."/>
            <person name="Jagus R."/>
            <person name="Joshi B."/>
        </authorList>
    </citation>
    <scope>FUNCTION</scope>
    <scope>ROLE OF PHOSPHORYLATION</scope>
    <scope>MUTAGENESIS OF SER-53 AND SER-209</scope>
</reference>
<reference key="21">
    <citation type="journal article" date="2001" name="J. Biol. Chem.">
        <title>Eukaryotic initiation factors 4A (eIF4A) and 4G (eIF4G) mutually interact in a 1:1 ratio in vivo.</title>
        <authorList>
            <person name="Li W."/>
            <person name="Belsham G.J."/>
            <person name="Proud C.G."/>
        </authorList>
    </citation>
    <scope>INTERACTION WITH EIF4A1 AND EIF4A2</scope>
</reference>
<reference key="22">
    <citation type="journal article" date="2001" name="J. Mol. Biol.">
        <title>The RING domains of the promyelocytic leukemia protein PML and the arenaviral protein Z repress translation by directly inhibiting translation initiation factor eIF4E.</title>
        <authorList>
            <person name="Kentsis A."/>
            <person name="Dwyer E.C."/>
            <person name="Perez J.M."/>
            <person name="Sharma M."/>
            <person name="Chen A."/>
            <person name="Pan Z.Q."/>
            <person name="Borden K.L."/>
        </authorList>
    </citation>
    <scope>INTERACTION WITH PML</scope>
    <scope>INTERACTION WITH VIRAL Z PROTEIN (MICROBIAL INFECTION)</scope>
</reference>
<reference key="23">
    <citation type="journal article" date="2001" name="Mol. Cell. Biol.">
        <title>The mitogen-activated protein kinase signal-integrating kinase Mnk2 is a eukaryotic initiation factor 4E kinase with high levels of basal activity in mammalian cells.</title>
        <authorList>
            <person name="Scheper G.C."/>
            <person name="Morrice N.A."/>
            <person name="Kleijn M."/>
            <person name="Proud C.G."/>
        </authorList>
    </citation>
    <scope>PHOSPHORYLATION AT SER-209 BY MKNK2</scope>
</reference>
<reference key="24">
    <citation type="journal article" date="2001" name="Science">
        <title>Coupled transcription and translation within nuclei of mammalian cells.</title>
        <authorList>
            <person name="Iborra F.J."/>
            <person name="Jackson D.A."/>
            <person name="Cook P.R."/>
        </authorList>
    </citation>
    <scope>SUBCELLULAR LOCATION</scope>
</reference>
<reference key="25">
    <citation type="journal article" date="2002" name="J. Biol. Chem.">
        <title>Phosphorylation of eukaryotic initiation factor (eIF) 4E is not required for de novo protein synthesis following recovery from hypertonic stress in human kidney cells.</title>
        <authorList>
            <person name="Morley S.J."/>
            <person name="Naegele S."/>
        </authorList>
    </citation>
    <scope>ROLE OF PHOSPHORYLATION</scope>
</reference>
<reference key="26">
    <citation type="journal article" date="2003" name="EMBO J.">
        <title>The proline-rich homeodomain protein, PRH, is a tissue-specific inhibitor of eIF4E-dependent cyclin D1 mRNA transport and growth.</title>
        <authorList>
            <person name="Topisirovic I."/>
            <person name="Culjkovic B."/>
            <person name="Cohen N."/>
            <person name="Perez J.M."/>
            <person name="Skrabanek L."/>
            <person name="Borden K.L."/>
        </authorList>
    </citation>
    <scope>INTERACTION WITH HHEX</scope>
    <scope>SUBCELLULAR LOCATION</scope>
</reference>
<reference key="27">
    <citation type="journal article" date="2003" name="Mol. Cell. Biol.">
        <title>The N and C termini of the splice variants of the human mitogen-activated protein kinase-interacting kinase Mnk2 determine activity and localization.</title>
        <authorList>
            <person name="Scheper G.C."/>
            <person name="Parra J.L."/>
            <person name="Wilson M."/>
            <person name="Van Kollenburg B."/>
            <person name="Vertegaal A.C.O."/>
            <person name="Han Z.-G."/>
            <person name="Proud C.G."/>
        </authorList>
    </citation>
    <scope>INTERACTION WITH MKNK2</scope>
</reference>
<reference key="28">
    <citation type="journal article" date="2004" name="Proc. Natl. Acad. Sci. U.S.A.">
        <title>Ribavirin suppresses eIF4E-mediated oncogenic transformation by physical mimicry of the 7-methyl guanosine mRNA cap.</title>
        <authorList>
            <person name="Kentsis A."/>
            <person name="Topisirovic I."/>
            <person name="Culjkovic B."/>
            <person name="Shao L."/>
            <person name="Borden K.L."/>
        </authorList>
    </citation>
    <scope>ROLE AS POTENTIAL THERAPEUTIC TARGET</scope>
    <scope>MUTAGENESIS OF TRP-56 AND TRP-73</scope>
</reference>
<reference key="29">
    <citation type="journal article" date="2005" name="Mol. Cell. Biol.">
        <title>Eukaryotic translation initiation factor 4E activity is modulated by HOXA9 at multiple levels.</title>
        <authorList>
            <person name="Topisirovic I."/>
            <person name="Kentsis A."/>
            <person name="Perez J.M."/>
            <person name="Guzman M.L."/>
            <person name="Jordan C.T."/>
            <person name="Borden K.L."/>
        </authorList>
    </citation>
    <scope>SUBCELLULAR LOCATION</scope>
</reference>
<reference key="30">
    <citation type="journal article" date="2006" name="PLoS Pathog.">
        <title>Human retroviral host restriction factors APOBEC3G and APOBEC3F localize to mRNA processing bodies.</title>
        <authorList>
            <person name="Wichroski M.J."/>
            <person name="Robb G.B."/>
            <person name="Rana T.M."/>
        </authorList>
    </citation>
    <scope>INTERACTION WITH APOBEC3G</scope>
</reference>
<reference key="31">
    <citation type="journal article" date="2005" name="J. Cell Biol.">
        <title>A role for the eIF4E-binding protein 4E-T in P-body formation and mRNA decay.</title>
        <authorList>
            <person name="Ferraiuolo M.A."/>
            <person name="Basak S."/>
            <person name="Dostie J."/>
            <person name="Murray E.L."/>
            <person name="Schoenberg D.R."/>
            <person name="Sonenberg N."/>
        </authorList>
    </citation>
    <scope>SUBCELLULAR LOCATION</scope>
    <scope>INTERACTION WITH EIF4ENIF1</scope>
</reference>
<reference key="32">
    <citation type="journal article" date="2008" name="Oncogene">
        <title>Candidate tumor suppressor DDX3 RNA helicase specifically represses cap-dependent translation by acting as an eIF4E inhibitory protein.</title>
        <authorList>
            <person name="Shih J.W."/>
            <person name="Tsai T.Y."/>
            <person name="Chao C.H."/>
            <person name="Wu Lee Y.H."/>
        </authorList>
    </citation>
    <scope>INTERACTION WITH DDX3X</scope>
    <scope>MUTAGENESIS OF TRP-73</scope>
</reference>
<reference key="33">
    <citation type="journal article" date="2009" name="Anal. Chem.">
        <title>Lys-N and trypsin cover complementary parts of the phosphoproteome in a refined SCX-based approach.</title>
        <authorList>
            <person name="Gauci S."/>
            <person name="Helbig A.O."/>
            <person name="Slijper M."/>
            <person name="Krijgsveld J."/>
            <person name="Heck A.J."/>
            <person name="Mohammed S."/>
        </authorList>
    </citation>
    <scope>ACETYLATION [LARGE SCALE ANALYSIS] AT ALA-2</scope>
    <scope>CLEAVAGE OF INITIATOR METHIONINE [LARGE SCALE ANALYSIS]</scope>
    <scope>IDENTIFICATION BY MASS SPECTROMETRY [LARGE SCALE ANALYSIS]</scope>
</reference>
<reference key="34">
    <citation type="journal article" date="2009" name="Blood">
        <title>Molecular targeting of the oncogene eIF4E in acute myeloid leukemia (AML): a proof-of-principle clinical trial with ribavirin.</title>
        <authorList>
            <person name="Assouline S."/>
            <person name="Culjkovic B."/>
            <person name="Cocolakis E."/>
            <person name="Rousseau C."/>
            <person name="Beslu N."/>
            <person name="Amri A."/>
            <person name="Caplan S."/>
            <person name="Leber B."/>
            <person name="Roy D.C."/>
            <person name="Miller W.H. Jr."/>
            <person name="Borden K.L."/>
        </authorList>
    </citation>
    <scope>ROLE AS POTENTIAL THERAPEUTIC TARGET</scope>
</reference>
<reference key="35">
    <citation type="journal article" date="2009" name="EMBO J.">
        <title>Molecular dissection of the eukaryotic initiation factor 4E (eIF4E) export-competent RNP.</title>
        <authorList>
            <person name="Topisirovic I."/>
            <person name="Siddiqui N."/>
            <person name="Lapointe V.L."/>
            <person name="Trost M."/>
            <person name="Thibault P."/>
            <person name="Bangeranye C."/>
            <person name="Pinol-Roma S."/>
            <person name="Borden K.L."/>
        </authorList>
    </citation>
    <scope>INTERACTION WITH LRPPRC</scope>
</reference>
<reference key="36">
    <citation type="journal article" date="2009" name="J. Med. Genet.">
        <title>Deregulation of EIF4E: a novel mechanism for autism.</title>
        <authorList>
            <person name="Neves-Pereira M."/>
            <person name="Mueller B."/>
            <person name="Massie D."/>
            <person name="Williams J.H."/>
            <person name="O'Brien P.C."/>
            <person name="Hughes A."/>
            <person name="Shen S.B."/>
            <person name="Clair D.S."/>
            <person name="Miedzybrodzka Z."/>
        </authorList>
    </citation>
    <scope>INVOLVEMENT IN AUTS19</scope>
    <scope>CHROMOSOMAL TRANSLOCATION</scope>
</reference>
<reference key="37">
    <citation type="journal article" date="2010" name="Nucleic Acids Res.">
        <title>The RNA binding protein Larp1 regulates cell division, apoptosis and cell migration.</title>
        <authorList>
            <person name="Burrows C."/>
            <person name="Abd Latip N."/>
            <person name="Lam S.J."/>
            <person name="Carpenter L."/>
            <person name="Sawicka K."/>
            <person name="Tzolovsky G."/>
            <person name="Gabra H."/>
            <person name="Bushell M."/>
            <person name="Glover D.M."/>
            <person name="Willis A.E."/>
            <person name="Blagden S.P."/>
        </authorList>
    </citation>
    <scope>INTERACTION WITH LARP1</scope>
</reference>
<reference key="38">
    <citation type="journal article" date="2010" name="Proc. Natl. Acad. Sci. U.S.A.">
        <title>Structural characterization of the Z RING-eIF4E complex reveals a distinct mode of control for eIF4E.</title>
        <authorList>
            <person name="Volpon L."/>
            <person name="Osborne M.J."/>
            <person name="Capul A.A."/>
            <person name="de la Torre J.C."/>
            <person name="Borden K.L."/>
        </authorList>
    </citation>
    <scope>INTERACTION WITH LASSA VIRUS PROTEIN Z (MICROBIAL INFECTION)</scope>
</reference>
<reference key="39">
    <citation type="journal article" date="2010" name="Proc. Natl. Acad. Sci. U.S.A.">
        <title>LIM-domain proteins, LIMD1, Ajuba, and WTIP are required for microRNA-mediated gene silencing.</title>
        <authorList>
            <person name="James V."/>
            <person name="Zhang Y."/>
            <person name="Foxler D.E."/>
            <person name="de Moor C.H."/>
            <person name="Kong Y.W."/>
            <person name="Webb T.M."/>
            <person name="Self T.J."/>
            <person name="Feng Y."/>
            <person name="Lagos D."/>
            <person name="Chu C.Y."/>
            <person name="Rana T.M."/>
            <person name="Morley S.J."/>
            <person name="Longmore G.D."/>
            <person name="Bushell M."/>
            <person name="Sharp T.V."/>
        </authorList>
    </citation>
    <scope>SUBCELLULAR LOCATION</scope>
    <scope>INTERACTION WITH LIMD1; WTIP AND AJUBA</scope>
</reference>
<reference key="40">
    <citation type="journal article" date="2011" name="BMC Syst. Biol.">
        <title>Initial characterization of the human central proteome.</title>
        <authorList>
            <person name="Burkard T.R."/>
            <person name="Planyavsky M."/>
            <person name="Kaupe I."/>
            <person name="Breitwieser F.P."/>
            <person name="Buerckstuemmer T."/>
            <person name="Bennett K.L."/>
            <person name="Superti-Furga G."/>
            <person name="Colinge J."/>
        </authorList>
    </citation>
    <scope>IDENTIFICATION BY MASS SPECTROMETRY [LARGE SCALE ANALYSIS]</scope>
</reference>
<reference key="41">
    <citation type="journal article" date="2012" name="Biochem. J.">
        <title>Critical roles of RNA helicase DDX3 and its interactions with eIF4E/PABP1 in stress granule assembly and stress response.</title>
        <authorList>
            <person name="Shih J.W."/>
            <person name="Wang W.T."/>
            <person name="Tsai T.Y."/>
            <person name="Kuo C.Y."/>
            <person name="Li H.K."/>
            <person name="Wu Lee Y.H."/>
        </authorList>
    </citation>
    <scope>INTERACTION WITH DDX3X</scope>
    <scope>SUBCELLULAR LOCATION</scope>
</reference>
<reference key="42">
    <citation type="journal article" date="2012" name="FEBS Lett.">
        <title>4E-BP3 regulates eIF4E-mediated nuclear mRNA export and interacts with replication protein A2.</title>
        <authorList>
            <person name="Chen C.C."/>
            <person name="Lee J.C."/>
            <person name="Chang M.C."/>
        </authorList>
    </citation>
    <scope>FUNCTION</scope>
    <scope>MUTAGENESIS OF TRP-56 AND TRP-73</scope>
</reference>
<reference key="43">
    <citation type="journal article" date="2012" name="Mol. Cell">
        <title>Translational homeostasis via the mRNA cap-binding protein, eIF4E.</title>
        <authorList>
            <person name="Yanagiya A."/>
            <person name="Suyama E."/>
            <person name="Adachi H."/>
            <person name="Svitkin Y.V."/>
            <person name="Aza-Blanc P."/>
            <person name="Imataka H."/>
            <person name="Mikami S."/>
            <person name="Martineau Y."/>
            <person name="Ronai Z.A."/>
            <person name="Sonenberg N."/>
        </authorList>
    </citation>
    <scope>FUNCTION</scope>
    <scope>MUTAGENESIS OF TRP-73</scope>
</reference>
<reference key="44">
    <citation type="journal article" date="2013" name="Nitric Oxide">
        <title>Human inducible nitric oxide synthase (iNOS) expression depends on chromosome region maintenance 1 (CRM1)- and eukaryotic translation initiation factor 4E (elF4E)-mediated nucleocytoplasmic mRNA transport.</title>
        <authorList>
            <person name="Bollmann F."/>
            <person name="Fechir K."/>
            <person name="Nowag S."/>
            <person name="Koch K."/>
            <person name="Art J."/>
            <person name="Kleinert H."/>
            <person name="Pautz A."/>
        </authorList>
    </citation>
    <scope>FUNCTION</scope>
    <scope>SUBCELLULAR LOCATION</scope>
</reference>
<reference key="45">
    <citation type="journal article" date="2013" name="J. Proteome Res.">
        <title>Toward a comprehensive characterization of a human cancer cell phosphoproteome.</title>
        <authorList>
            <person name="Zhou H."/>
            <person name="Di Palma S."/>
            <person name="Preisinger C."/>
            <person name="Peng M."/>
            <person name="Polat A.N."/>
            <person name="Heck A.J."/>
            <person name="Mohammed S."/>
        </authorList>
    </citation>
    <scope>PHOSPHORYLATION [LARGE SCALE ANALYSIS] AT THR-22</scope>
    <scope>IDENTIFICATION BY MASS SPECTROMETRY [LARGE SCALE ANALYSIS]</scope>
    <source>
        <tissue>Erythroleukemia</tissue>
    </source>
</reference>
<reference key="46">
    <citation type="journal article" date="2013" name="PLoS ONE">
        <title>Investigating the consequences of eIF4E2 (4EHP) interaction with 4E-transporter on its cellular distribution in HeLa cells.</title>
        <authorList>
            <person name="Kubacka D."/>
            <person name="Kamenska A."/>
            <person name="Broomhead H."/>
            <person name="Minshall N."/>
            <person name="Darzynkiewicz E."/>
            <person name="Standart N."/>
        </authorList>
    </citation>
    <scope>INTERACTION WITH EIF4ENIF1</scope>
</reference>
<reference key="47">
    <citation type="journal article" date="2013" name="Structure">
        <title>Interaction of the eukaryotic initiation factor 4E with 4E-BP2 at a dynamic bipartite interface.</title>
        <authorList>
            <person name="Lukhele S."/>
            <person name="Bah A."/>
            <person name="Lin H."/>
            <person name="Sonenberg N."/>
            <person name="Forman-Kay J.D."/>
        </authorList>
    </citation>
    <scope>INTERACTION WITH EIF4EBP2</scope>
</reference>
<reference key="48">
    <citation type="journal article" date="2014" name="Nucleic Acids Res.">
        <title>Human 4E-T represses translation of bound mRNAs and enhances microRNA-mediated silencing.</title>
        <authorList>
            <person name="Kamenska A."/>
            <person name="Lu W.T."/>
            <person name="Kubacka D."/>
            <person name="Broomhead H."/>
            <person name="Minshall N."/>
            <person name="Bushell M."/>
            <person name="Standart N."/>
        </authorList>
    </citation>
    <scope>FUNCTION</scope>
    <scope>SUBCELLULAR LOCATION</scope>
    <scope>INTERACTION WITH EIF4ENIF1</scope>
</reference>
<reference key="49">
    <citation type="journal article" date="2015" name="Nature">
        <title>Folding of an intrinsically disordered protein by phosphorylation as a regulatory switch.</title>
        <authorList>
            <person name="Bah A."/>
            <person name="Vernon R.M."/>
            <person name="Siddiqui Z."/>
            <person name="Krzeminski M."/>
            <person name="Muhandiram R."/>
            <person name="Zhao C."/>
            <person name="Sonenberg N."/>
            <person name="Kay L.E."/>
            <person name="Forman-Kay J.D."/>
        </authorList>
    </citation>
    <scope>INTERACTION WITH EIF4EBP2</scope>
</reference>
<reference key="50">
    <citation type="journal article" date="2015" name="PLoS ONE">
        <title>Phosphorylation of eIF4E confers resistance to cellular stress and DNA-damaging agents through an interaction with 4E-T: a rationale for novel therapeutic approaches.</title>
        <authorList>
            <person name="Martinez A."/>
            <person name="Sese M."/>
            <person name="Losa J.H."/>
            <person name="Robichaud N."/>
            <person name="Sonenberg N."/>
            <person name="Aasen T."/>
            <person name="Ramon Y Cajal S."/>
        </authorList>
    </citation>
    <scope>SUBCELLULAR LOCATION</scope>
    <scope>PHOSPHORYLATION AT SER-209</scope>
    <scope>INTERACTION WITH EIF4ENIF1</scope>
    <scope>MUTAGENESIS OF SER-209</scope>
</reference>
<reference key="51">
    <citation type="journal article" date="2016" name="Mol. Cell">
        <title>The m(6)A methyltransferase METTL3 promotes translation in human cancer cells.</title>
        <authorList>
            <person name="Lin S."/>
            <person name="Choe J."/>
            <person name="Du P."/>
            <person name="Triboulet R."/>
            <person name="Gregory R.I."/>
        </authorList>
    </citation>
    <scope>INTERACTION WITH METTL3</scope>
</reference>
<reference key="52">
    <citation type="journal article" date="2017" name="Biochem. J.">
        <title>The helicase, DDX3X, interacts with poly(A)-binding protein 1 (PABP1) and caprin-1 at the leading edge of migrating fibroblasts and is required for efficient cell spreading.</title>
        <authorList>
            <person name="Copsey A.C."/>
            <person name="Cooper S."/>
            <person name="Parker R."/>
            <person name="Lineham E."/>
            <person name="Lapworth C."/>
            <person name="Jallad D."/>
            <person name="Sweet S."/>
            <person name="Morley S.J."/>
        </authorList>
    </citation>
    <scope>INTERACTION WITH DDX3X</scope>
</reference>
<reference key="53">
    <citation type="journal article" date="2017" name="Proc. Natl. Acad. Sci. U.S.A.">
        <title>Cap-binding protein 4EHP effects translation silencing by microRNAs.</title>
        <authorList>
            <person name="Chapat C."/>
            <person name="Jafarnejad S.M."/>
            <person name="Matta-Camacho E."/>
            <person name="Hesketh G.G."/>
            <person name="Gelbart I.A."/>
            <person name="Attig J."/>
            <person name="Gkogkas C.G."/>
            <person name="Alain T."/>
            <person name="Stern-Ginossar N."/>
            <person name="Fabian M.R."/>
            <person name="Gingras A.C."/>
            <person name="Duchaine T.F."/>
            <person name="Sonenberg N."/>
        </authorList>
    </citation>
    <scope>INTERACTION WITH EIF4ENIF1</scope>
</reference>
<reference key="54">
    <citation type="journal article" date="2017" name="RNA">
        <title>A biochemical framework for eIF4E-dependent mRNA export and nuclear recycling of the export machinery.</title>
        <authorList>
            <person name="Volpon L."/>
            <person name="Culjkovic-Kraljacic B."/>
            <person name="Sohn H.S."/>
            <person name="Blanchet-Cohen A."/>
            <person name="Osborne M.J."/>
            <person name="Borden K.L.B."/>
        </authorList>
    </citation>
    <scope>INTERACTION WITH LRPPRC</scope>
</reference>
<reference key="55">
    <citation type="journal article" date="2018" name="Cell Death Differ.">
        <title>Rbm24, a target of p53, is necessary for proper expression of p53 and heart development.</title>
        <authorList>
            <person name="Zhang M."/>
            <person name="Zhang Y."/>
            <person name="Xu E."/>
            <person name="Mohibi S."/>
            <person name="de Anda D.M."/>
            <person name="Jiang Y."/>
            <person name="Zhang J."/>
            <person name="Chen X."/>
        </authorList>
    </citation>
    <scope>INTERACTION WITH RBM24</scope>
</reference>
<reference key="56">
    <citation type="journal article" date="2018" name="Mol. Cell. Biol.">
        <title>Dynamic interaction of eukaryotic initiation factor 4G1 (eIF4G1) with eIF4E and eIF1 underlies scanning-dependent and -independent translation.</title>
        <authorList>
            <person name="Haimov O."/>
            <person name="Sehrawat U."/>
            <person name="Tamarkin-Ben Harush A."/>
            <person name="Bahat A."/>
            <person name="Uzonyi A."/>
            <person name="Will A."/>
            <person name="Hiraishi H."/>
            <person name="Asano K."/>
            <person name="Dikstein R."/>
        </authorList>
    </citation>
    <scope>FUNCTION</scope>
    <scope>INTERACTION WITH EIF4G1</scope>
</reference>
<reference key="57">
    <citation type="journal article" date="2019" name="Cell Rep.">
        <title>Nuclear eIF4E Stimulates 3'-End Cleavage of Target RNAs.</title>
        <authorList>
            <person name="Davis M.R."/>
            <person name="Delaleau M."/>
            <person name="Borden K.L.B."/>
        </authorList>
    </citation>
    <scope>INTERACTION WITH CPSF3 AND CPSF1</scope>
</reference>
<reference key="58">
    <citation type="journal article" date="2019" name="Proc. Natl. Acad. Sci. U.S.A.">
        <title>Structural studies of the eIF4E-VPg complex reveal a direct competition for capped RNA: Implications for translation.</title>
        <authorList>
            <person name="Coutinho de Oliveira L."/>
            <person name="Volpon L."/>
            <person name="Rahardjo A.K."/>
            <person name="Osborne M.J."/>
            <person name="Culjkovic-Kraljacic B."/>
            <person name="Trahan C."/>
            <person name="Oeffinger M."/>
            <person name="Kwok B.H."/>
            <person name="Borden K.L.B."/>
        </authorList>
    </citation>
    <scope>INTERACTION WITH POTATO VIRUS Y VPG (MICROBIAL INFECTION)</scope>
</reference>
<reference key="59">
    <citation type="journal article" date="2023" name="EMBO J.">
        <title>The eukaryotic translation initiation factor eIF4E reprograms alternative splicing.</title>
        <authorList>
            <person name="Ghram M."/>
            <person name="Morris G."/>
            <person name="Culjkovic-Kraljacic B."/>
            <person name="Mars J.C."/>
            <person name="Gendron P."/>
            <person name="Skrabanek L."/>
            <person name="Revuelta M.V."/>
            <person name="Cerchietti L."/>
            <person name="Guzman M.L."/>
            <person name="Borden K.L.B."/>
        </authorList>
    </citation>
    <scope>SUBCELLULAR LOCATION</scope>
</reference>
<reference key="60">
    <citation type="journal article" date="2002" name="Biochem. J.">
        <title>Crystal structures of 7-methylguanosine 5'-triphosphate (m(7)GTP)- and P(1)-7-methylguanosine-P(3)-adenosine-5',5'-triphosphate (m(7)GpppA)-bound human full-length eukaryotic initiation factor 4E: biological importance of the C-terminal flexible region.</title>
        <authorList>
            <person name="Tomoo K."/>
            <person name="Shen X."/>
            <person name="Okabe K."/>
            <person name="Nozoe Y."/>
            <person name="Fukuhara S."/>
            <person name="Morino S."/>
            <person name="Ishida T."/>
            <person name="Taniguchi T."/>
            <person name="Hasegawa H."/>
            <person name="Terashima A."/>
            <person name="Sasaki M."/>
            <person name="Katsuya Y."/>
            <person name="Kitamura K."/>
            <person name="Miyoshi H."/>
            <person name="Ishikawa M."/>
            <person name="Miura K."/>
        </authorList>
    </citation>
    <scope>X-RAY CRYSTALLOGRAPHY (2.0 ANGSTROMS) IN COMPLEX WITH MRNA CAP ANALOGS</scope>
</reference>
<reference key="61">
    <citation type="journal article" date="2003" name="J. Biomol. NMR">
        <title>Backbone resonance assignment of human eukaryotic translation initiation factor 4E (eIF4E) in complex with 7-methylguanosine diphosphate (m7GDP) and a 17-amino acid peptide derived from human eIF4GII.</title>
        <authorList>
            <person name="Miura T."/>
            <person name="Shiratori Y."/>
            <person name="Shimma N."/>
        </authorList>
    </citation>
    <scope>STRUCTURE BY NMR IN COMPLEX WITH EIF4G3 AND MRNA CAP ANALOGS</scope>
</reference>
<reference key="62">
    <citation type="journal article" date="2005" name="Biochim. Biophys. Acta">
        <title>Structural basis for mRNA cap-binding regulation of eukaryotic initiation factor 4E by 4E-binding protein, studied by spectroscopic, X-ray crystal structural, and molecular dynamics simulation methods.</title>
        <authorList>
            <person name="Tomoo K."/>
            <person name="Matsushita Y."/>
            <person name="Fujisaki H."/>
            <person name="Abiko F."/>
            <person name="Shen X."/>
            <person name="Taniguchi T."/>
            <person name="Miyagawa H."/>
            <person name="Kitamura K."/>
            <person name="Miura K."/>
            <person name="Ishida T."/>
        </authorList>
    </citation>
    <scope>X-RAY CRYSTALLOGRAPHY (2.10 ANGSTROMS) OF 27-217 IN COMPLEX WITH MRNA CAP ANALOG AND EIF4EBP1</scope>
    <scope>FUNCTION</scope>
    <scope>INTERACTION WITH EIF4EBP1; EIF4EBP2 AND EIF4EBP3</scope>
</reference>
<reference key="63">
    <citation type="journal article" date="2006" name="EMBO J.">
        <title>Cap-free structure of eIF4E suggests a basis for conformational regulation by its ligands.</title>
        <authorList>
            <person name="Volpon L."/>
            <person name="Osborne M.J."/>
            <person name="Topisirovic I."/>
            <person name="Siddiqui N."/>
            <person name="Borden K.L.B."/>
        </authorList>
    </citation>
    <scope>STRUCTURE BY NMR</scope>
    <scope>CLEAVAGE OF INITIATOR METHIONINE</scope>
    <scope>MASS SPECTROMETRY</scope>
    <scope>MUTAGENESIS OF LYS-119</scope>
</reference>
<reference key="64">
    <citation type="journal article" date="2007" name="J. Mol. Biol.">
        <title>Crystallographic and mass spectrometric characterisation of eIF4E with N7-alkylated cap derivatives.</title>
        <authorList>
            <person name="Brown C.J."/>
            <person name="McNae I."/>
            <person name="Fischer P.M."/>
            <person name="Walkinshaw M.D."/>
        </authorList>
    </citation>
    <scope>X-RAY CRYSTALLOGRAPHY (2.10 ANGSTROMS) IN COMPLEX WITH MRNA CAP ANALOGS</scope>
    <scope>MASS SPECTROMETRY</scope>
</reference>
<reference key="65">
    <citation type="journal article" date="2011" name="J. Pept. Sci.">
        <title>Structural scaffold for eIF4E binding selectivity of 4E-BP isoforms: crystal structure of eIF4E binding region of 4E-BP2 and its comparison with that of 4E-BP1.</title>
        <authorList>
            <person name="Fukuyo A."/>
            <person name="In Y."/>
            <person name="Ishida T."/>
            <person name="Tomoo K."/>
        </authorList>
    </citation>
    <scope>X-RAY CRYSTALLOGRAPHY (2.2 ANGSTROMS) OF 27-217 IN COMPLEX WITH EIF4EBP2</scope>
    <scope>INTERACTION WITH EIF4EBP2</scope>
</reference>
<reference evidence="69" key="66">
    <citation type="journal article" date="2015" name="Mol. Cell">
        <title>Molecular architecture of 4E-BP translational inhibitors bound to eIF4E.</title>
        <authorList>
            <person name="Peter D."/>
            <person name="Igreja C."/>
            <person name="Weber R."/>
            <person name="Wohlbold L."/>
            <person name="Weiler C."/>
            <person name="Ebertsch L."/>
            <person name="Weichenrieder O."/>
            <person name="Izaurralde E."/>
        </authorList>
    </citation>
    <scope>X-RAY CRYSTALLOGRAPHY (1.75 ANGSTROMS) OF 36-217 IN COMPLEX WITH EIF4EBP1</scope>
    <scope>INTERACTION WITH EIF4EBP1</scope>
</reference>
<accession>P06730</accession>
<accession>B7Z6V1</accession>
<accession>D6RCQ6</accession>
<accession>Q96E95</accession>
<sequence>MATVEPETTPTPNPPTTEEEKTESNQEVANPEHYIKHPLQNRWALWFFKNDKSKTWQANLRLISKFDTVEDFWALYNHIQLSSNLMPGCDYSLFKDGIEPMWEDEKNKRGGRWLITLNKQQRRSDLDRFWLETLLCLIGESFDDYSDDVCGAVVNVRAKGDKIAIWTTECENREAVTHIGRVYKERLGLPPKIVIGYQSHADTATKSGSTTKNRFVV</sequence>
<name>IF4E_HUMAN</name>
<dbReference type="EMBL" id="M15353">
    <property type="protein sequence ID" value="AAC13647.1"/>
    <property type="molecule type" value="mRNA"/>
</dbReference>
<dbReference type="EMBL" id="AK300982">
    <property type="protein sequence ID" value="BAH13387.1"/>
    <property type="molecule type" value="mRNA"/>
</dbReference>
<dbReference type="EMBL" id="AC019131">
    <property type="status" value="NOT_ANNOTATED_CDS"/>
    <property type="molecule type" value="Genomic_DNA"/>
</dbReference>
<dbReference type="EMBL" id="AC093836">
    <property type="status" value="NOT_ANNOTATED_CDS"/>
    <property type="molecule type" value="Genomic_DNA"/>
</dbReference>
<dbReference type="EMBL" id="BC012611">
    <property type="protein sequence ID" value="AAH12611.1"/>
    <property type="molecule type" value="mRNA"/>
</dbReference>
<dbReference type="EMBL" id="BC035166">
    <property type="protein sequence ID" value="AAH35166.1"/>
    <property type="molecule type" value="mRNA"/>
</dbReference>
<dbReference type="EMBL" id="BC043226">
    <property type="protein sequence ID" value="AAH43226.1"/>
    <property type="molecule type" value="mRNA"/>
</dbReference>
<dbReference type="EMBL" id="BM849222">
    <property type="status" value="NOT_ANNOTATED_CDS"/>
    <property type="molecule type" value="mRNA"/>
</dbReference>
<dbReference type="CCDS" id="CCDS34031.1">
    <molecule id="P06730-1"/>
</dbReference>
<dbReference type="CCDS" id="CCDS47109.1">
    <molecule id="P06730-3"/>
</dbReference>
<dbReference type="CCDS" id="CCDS54779.1">
    <molecule id="P06730-2"/>
</dbReference>
<dbReference type="PIR" id="A26411">
    <property type="entry name" value="A26411"/>
</dbReference>
<dbReference type="RefSeq" id="NP_001124150.1">
    <molecule id="P06730-3"/>
    <property type="nucleotide sequence ID" value="NM_001130678.4"/>
</dbReference>
<dbReference type="RefSeq" id="NP_001124151.1">
    <molecule id="P06730-2"/>
    <property type="nucleotide sequence ID" value="NM_001130679.3"/>
</dbReference>
<dbReference type="RefSeq" id="NP_001317946.1">
    <property type="nucleotide sequence ID" value="NM_001331017.1"/>
</dbReference>
<dbReference type="RefSeq" id="NP_001959.1">
    <molecule id="P06730-1"/>
    <property type="nucleotide sequence ID" value="NM_001968.5"/>
</dbReference>
<dbReference type="PDB" id="1IPB">
    <property type="method" value="X-ray"/>
    <property type="resolution" value="2.00 A"/>
    <property type="chains" value="A=1-217"/>
</dbReference>
<dbReference type="PDB" id="1IPC">
    <property type="method" value="X-ray"/>
    <property type="resolution" value="2.00 A"/>
    <property type="chains" value="A=1-217"/>
</dbReference>
<dbReference type="PDB" id="1WKW">
    <property type="method" value="X-ray"/>
    <property type="resolution" value="2.10 A"/>
    <property type="chains" value="A=27-217"/>
</dbReference>
<dbReference type="PDB" id="2GPQ">
    <property type="method" value="NMR"/>
    <property type="chains" value="A=1-217"/>
</dbReference>
<dbReference type="PDB" id="2V8W">
    <property type="method" value="X-ray"/>
    <property type="resolution" value="2.30 A"/>
    <property type="chains" value="A/E=1-217"/>
</dbReference>
<dbReference type="PDB" id="2V8X">
    <property type="method" value="X-ray"/>
    <property type="resolution" value="2.30 A"/>
    <property type="chains" value="A/E=1-217"/>
</dbReference>
<dbReference type="PDB" id="2V8Y">
    <property type="method" value="X-ray"/>
    <property type="resolution" value="2.10 A"/>
    <property type="chains" value="A/E=1-217"/>
</dbReference>
<dbReference type="PDB" id="2W97">
    <property type="method" value="X-ray"/>
    <property type="resolution" value="2.29 A"/>
    <property type="chains" value="A/B=1-217"/>
</dbReference>
<dbReference type="PDB" id="3AM7">
    <property type="method" value="X-ray"/>
    <property type="resolution" value="2.20 A"/>
    <property type="chains" value="A=27-217"/>
</dbReference>
<dbReference type="PDB" id="3TF2">
    <property type="method" value="X-ray"/>
    <property type="resolution" value="2.10 A"/>
    <property type="chains" value="A/B/C/D=1-217"/>
</dbReference>
<dbReference type="PDB" id="3U7X">
    <property type="method" value="X-ray"/>
    <property type="resolution" value="2.10 A"/>
    <property type="chains" value="A/B=1-217"/>
</dbReference>
<dbReference type="PDB" id="4AZA">
    <property type="method" value="X-ray"/>
    <property type="resolution" value="2.16 A"/>
    <property type="chains" value="A/C=1-217"/>
</dbReference>
<dbReference type="PDB" id="4BEA">
    <property type="method" value="X-ray"/>
    <property type="resolution" value="2.57 A"/>
    <property type="chains" value="A=1-217"/>
</dbReference>
<dbReference type="PDB" id="4DT6">
    <property type="method" value="X-ray"/>
    <property type="resolution" value="2.60 A"/>
    <property type="chains" value="A=1-217"/>
</dbReference>
<dbReference type="PDB" id="4DUM">
    <property type="method" value="X-ray"/>
    <property type="resolution" value="2.95 A"/>
    <property type="chains" value="A=1-217"/>
</dbReference>
<dbReference type="PDB" id="4TPW">
    <property type="method" value="X-ray"/>
    <property type="resolution" value="1.50 A"/>
    <property type="chains" value="A/B=28-217"/>
</dbReference>
<dbReference type="PDB" id="4TQB">
    <property type="method" value="X-ray"/>
    <property type="resolution" value="1.59 A"/>
    <property type="chains" value="A/B=28-217"/>
</dbReference>
<dbReference type="PDB" id="4TQC">
    <property type="method" value="X-ray"/>
    <property type="resolution" value="1.80 A"/>
    <property type="chains" value="A/B=28-217"/>
</dbReference>
<dbReference type="PDB" id="4UED">
    <property type="method" value="X-ray"/>
    <property type="resolution" value="1.75 A"/>
    <property type="chains" value="A=36-217"/>
</dbReference>
<dbReference type="PDB" id="5EHC">
    <property type="method" value="X-ray"/>
    <property type="resolution" value="2.40 A"/>
    <property type="chains" value="A=1-217"/>
</dbReference>
<dbReference type="PDB" id="5EI3">
    <property type="method" value="X-ray"/>
    <property type="resolution" value="1.71 A"/>
    <property type="chains" value="A=1-217"/>
</dbReference>
<dbReference type="PDB" id="5EIR">
    <property type="method" value="X-ray"/>
    <property type="resolution" value="2.69 A"/>
    <property type="chains" value="A=1-217"/>
</dbReference>
<dbReference type="PDB" id="5EKV">
    <property type="method" value="X-ray"/>
    <property type="resolution" value="3.61 A"/>
    <property type="chains" value="A/C=1-217"/>
</dbReference>
<dbReference type="PDB" id="5GW6">
    <property type="method" value="X-ray"/>
    <property type="resolution" value="1.97 A"/>
    <property type="chains" value="A=23-217"/>
</dbReference>
<dbReference type="PDB" id="5T46">
    <property type="method" value="X-ray"/>
    <property type="resolution" value="1.53 A"/>
    <property type="chains" value="A/C=1-217"/>
</dbReference>
<dbReference type="PDB" id="5ZJY">
    <property type="method" value="X-ray"/>
    <property type="resolution" value="1.59 A"/>
    <property type="chains" value="A=28-217"/>
</dbReference>
<dbReference type="PDB" id="5ZJZ">
    <property type="method" value="X-ray"/>
    <property type="resolution" value="1.67 A"/>
    <property type="chains" value="A=28-217"/>
</dbReference>
<dbReference type="PDB" id="5ZK5">
    <property type="method" value="X-ray"/>
    <property type="resolution" value="2.25 A"/>
    <property type="chains" value="A=28-217"/>
</dbReference>
<dbReference type="PDB" id="5ZK7">
    <property type="method" value="X-ray"/>
    <property type="resolution" value="2.12 A"/>
    <property type="chains" value="A/B=28-217"/>
</dbReference>
<dbReference type="PDB" id="5ZK9">
    <property type="method" value="X-ray"/>
    <property type="resolution" value="1.76 A"/>
    <property type="chains" value="A=28-217"/>
</dbReference>
<dbReference type="PDB" id="5ZML">
    <property type="method" value="X-ray"/>
    <property type="resolution" value="1.80 A"/>
    <property type="chains" value="A=27-217"/>
</dbReference>
<dbReference type="PDB" id="7D6Y">
    <property type="method" value="X-ray"/>
    <property type="resolution" value="1.67 A"/>
    <property type="chains" value="A=1-217"/>
</dbReference>
<dbReference type="PDB" id="7D8B">
    <property type="method" value="X-ray"/>
    <property type="resolution" value="2.46 A"/>
    <property type="chains" value="A/C=1-217"/>
</dbReference>
<dbReference type="PDB" id="7EZW">
    <property type="method" value="X-ray"/>
    <property type="resolution" value="2.35 A"/>
    <property type="chains" value="A=1-217"/>
</dbReference>
<dbReference type="PDB" id="7F07">
    <property type="method" value="X-ray"/>
    <property type="resolution" value="2.25 A"/>
    <property type="chains" value="A=1-217"/>
</dbReference>
<dbReference type="PDB" id="7MEU">
    <property type="method" value="X-ray"/>
    <property type="resolution" value="1.91 A"/>
    <property type="chains" value="A/B=26-217"/>
</dbReference>
<dbReference type="PDB" id="7XTP">
    <property type="method" value="X-ray"/>
    <property type="resolution" value="1.83 A"/>
    <property type="chains" value="A/B=1-217"/>
</dbReference>
<dbReference type="PDB" id="8QM4">
    <property type="method" value="X-ray"/>
    <property type="resolution" value="1.85 A"/>
    <property type="chains" value="A/B=36-217"/>
</dbReference>
<dbReference type="PDB" id="8QM5">
    <property type="method" value="X-ray"/>
    <property type="resolution" value="1.89 A"/>
    <property type="chains" value="A/B=36-217"/>
</dbReference>
<dbReference type="PDB" id="8QM6">
    <property type="method" value="X-ray"/>
    <property type="resolution" value="1.93 A"/>
    <property type="chains" value="A/B=36-217"/>
</dbReference>
<dbReference type="PDB" id="8QM7">
    <property type="method" value="X-ray"/>
    <property type="resolution" value="2.19 A"/>
    <property type="chains" value="A/B=36-217"/>
</dbReference>
<dbReference type="PDB" id="8QM8">
    <property type="method" value="X-ray"/>
    <property type="resolution" value="1.58 A"/>
    <property type="chains" value="A/B=36-217"/>
</dbReference>
<dbReference type="PDB" id="8QM9">
    <property type="method" value="X-ray"/>
    <property type="resolution" value="1.97 A"/>
    <property type="chains" value="A/B=36-217"/>
</dbReference>
<dbReference type="PDB" id="8SX4">
    <property type="method" value="X-ray"/>
    <property type="resolution" value="1.99 A"/>
    <property type="chains" value="A/B=28-217"/>
</dbReference>
<dbReference type="PDB" id="9DON">
    <property type="method" value="X-ray"/>
    <property type="resolution" value="2.09 A"/>
    <property type="chains" value="A/B=28-217"/>
</dbReference>
<dbReference type="PDBsum" id="1IPB"/>
<dbReference type="PDBsum" id="1IPC"/>
<dbReference type="PDBsum" id="1WKW"/>
<dbReference type="PDBsum" id="2GPQ"/>
<dbReference type="PDBsum" id="2V8W"/>
<dbReference type="PDBsum" id="2V8X"/>
<dbReference type="PDBsum" id="2V8Y"/>
<dbReference type="PDBsum" id="2W97"/>
<dbReference type="PDBsum" id="3AM7"/>
<dbReference type="PDBsum" id="3TF2"/>
<dbReference type="PDBsum" id="3U7X"/>
<dbReference type="PDBsum" id="4AZA"/>
<dbReference type="PDBsum" id="4BEA"/>
<dbReference type="PDBsum" id="4DT6"/>
<dbReference type="PDBsum" id="4DUM"/>
<dbReference type="PDBsum" id="4TPW"/>
<dbReference type="PDBsum" id="4TQB"/>
<dbReference type="PDBsum" id="4TQC"/>
<dbReference type="PDBsum" id="4UED"/>
<dbReference type="PDBsum" id="5EHC"/>
<dbReference type="PDBsum" id="5EI3"/>
<dbReference type="PDBsum" id="5EIR"/>
<dbReference type="PDBsum" id="5EKV"/>
<dbReference type="PDBsum" id="5GW6"/>
<dbReference type="PDBsum" id="5T46"/>
<dbReference type="PDBsum" id="5ZJY"/>
<dbReference type="PDBsum" id="5ZJZ"/>
<dbReference type="PDBsum" id="5ZK5"/>
<dbReference type="PDBsum" id="5ZK7"/>
<dbReference type="PDBsum" id="5ZK9"/>
<dbReference type="PDBsum" id="5ZML"/>
<dbReference type="PDBsum" id="7D6Y"/>
<dbReference type="PDBsum" id="7D8B"/>
<dbReference type="PDBsum" id="7EZW"/>
<dbReference type="PDBsum" id="7F07"/>
<dbReference type="PDBsum" id="7MEU"/>
<dbReference type="PDBsum" id="7XTP"/>
<dbReference type="PDBsum" id="8QM4"/>
<dbReference type="PDBsum" id="8QM5"/>
<dbReference type="PDBsum" id="8QM6"/>
<dbReference type="PDBsum" id="8QM7"/>
<dbReference type="PDBsum" id="8QM8"/>
<dbReference type="PDBsum" id="8QM9"/>
<dbReference type="PDBsum" id="8SX4"/>
<dbReference type="PDBsum" id="9DON"/>
<dbReference type="BMRB" id="P06730"/>
<dbReference type="SMR" id="P06730"/>
<dbReference type="BioGRID" id="108292">
    <property type="interactions" value="193"/>
</dbReference>
<dbReference type="ComplexPortal" id="CPX-2349">
    <property type="entry name" value="eIF4E-CYFIP1-FMRP translational repressor complex"/>
</dbReference>
<dbReference type="ComplexPortal" id="CPX-2666">
    <property type="entry name" value="Eukaryotic translation initiation factor 4F, EIF4A1 and EIF4G1 variant"/>
</dbReference>
<dbReference type="ComplexPortal" id="CPX-5634">
    <property type="entry name" value="Eukaryotic translation initiation factor 4F, EIF4A2 and EIF4G1 variant"/>
</dbReference>
<dbReference type="ComplexPortal" id="CPX-5635">
    <property type="entry name" value="Eukaryotic translation initiation factor 4F, EIF4A1 and EIF4G3 variant"/>
</dbReference>
<dbReference type="ComplexPortal" id="CPX-5636">
    <property type="entry name" value="Eukaryotic translation initiation factor 4F, EIF4A2 and EIF4G3 variant"/>
</dbReference>
<dbReference type="CORUM" id="P06730"/>
<dbReference type="DIP" id="DIP-22N"/>
<dbReference type="ELM" id="P06730"/>
<dbReference type="FunCoup" id="P06730">
    <property type="interactions" value="2541"/>
</dbReference>
<dbReference type="IntAct" id="P06730">
    <property type="interactions" value="99"/>
</dbReference>
<dbReference type="MINT" id="P06730"/>
<dbReference type="STRING" id="9606.ENSP00000425561"/>
<dbReference type="BindingDB" id="P06730"/>
<dbReference type="ChEMBL" id="CHEMBL4848"/>
<dbReference type="DrugBank" id="DB01960">
    <property type="generic name" value="7-methyl-7,8-dihydroguanosine-5'-diphosphate"/>
</dbReference>
<dbReference type="DrugBank" id="DB01649">
    <property type="generic name" value="7-methyl-GpppA"/>
</dbReference>
<dbReference type="DrugBank" id="DB02716">
    <property type="generic name" value="7-methyl-guanosine-5'-triphosphate"/>
</dbReference>
<dbReference type="DrugBank" id="DB05165">
    <property type="generic name" value="LY2275796"/>
</dbReference>
<dbReference type="DrugBank" id="DB08217">
    <property type="generic name" value="S-[(1-Hydroxy-2,2,5,5-tetramethyl-2,5-dihydro-1H-pyrrol-3-yl)methyl] methanesulfonothioate"/>
</dbReference>
<dbReference type="DrugCentral" id="P06730"/>
<dbReference type="GlyCosmos" id="P06730">
    <property type="glycosylation" value="2 sites, 1 glycan"/>
</dbReference>
<dbReference type="GlyGen" id="P06730">
    <property type="glycosylation" value="2 sites, 1 O-linked glycan (2 sites)"/>
</dbReference>
<dbReference type="iPTMnet" id="P06730"/>
<dbReference type="MetOSite" id="P06730"/>
<dbReference type="PhosphoSitePlus" id="P06730"/>
<dbReference type="SwissPalm" id="P06730"/>
<dbReference type="BioMuta" id="EIF4E"/>
<dbReference type="DMDM" id="1352435"/>
<dbReference type="OGP" id="P06730"/>
<dbReference type="REPRODUCTION-2DPAGE" id="IPI00027485"/>
<dbReference type="jPOST" id="P06730"/>
<dbReference type="MassIVE" id="P06730"/>
<dbReference type="PeptideAtlas" id="P06730"/>
<dbReference type="ProteomicsDB" id="51914">
    <molecule id="P06730-1"/>
</dbReference>
<dbReference type="ProteomicsDB" id="51915">
    <molecule id="P06730-2"/>
</dbReference>
<dbReference type="ProteomicsDB" id="51916">
    <molecule id="P06730-3"/>
</dbReference>
<dbReference type="Pumba" id="P06730"/>
<dbReference type="TopDownProteomics" id="P06730-1">
    <molecule id="P06730-1"/>
</dbReference>
<dbReference type="Antibodypedia" id="3421">
    <property type="antibodies" value="1006 antibodies from 47 providers"/>
</dbReference>
<dbReference type="DNASU" id="1977"/>
<dbReference type="Ensembl" id="ENST00000280892.10">
    <molecule id="P06730-3"/>
    <property type="protein sequence ID" value="ENSP00000280892.6"/>
    <property type="gene ID" value="ENSG00000151247.13"/>
</dbReference>
<dbReference type="Ensembl" id="ENST00000450253.7">
    <molecule id="P06730-1"/>
    <property type="protein sequence ID" value="ENSP00000389624.2"/>
    <property type="gene ID" value="ENSG00000151247.13"/>
</dbReference>
<dbReference type="Ensembl" id="ENST00000505992.1">
    <molecule id="P06730-2"/>
    <property type="protein sequence ID" value="ENSP00000425561.1"/>
    <property type="gene ID" value="ENSG00000151247.13"/>
</dbReference>
<dbReference type="GeneID" id="1977"/>
<dbReference type="KEGG" id="hsa:1977"/>
<dbReference type="MANE-Select" id="ENST00000450253.7">
    <property type="protein sequence ID" value="ENSP00000389624.2"/>
    <property type="RefSeq nucleotide sequence ID" value="NM_001968.5"/>
    <property type="RefSeq protein sequence ID" value="NP_001959.1"/>
</dbReference>
<dbReference type="UCSC" id="uc003hue.3">
    <molecule id="P06730-1"/>
    <property type="organism name" value="human"/>
</dbReference>
<dbReference type="AGR" id="HGNC:3287"/>
<dbReference type="CTD" id="1977"/>
<dbReference type="DisGeNET" id="1977"/>
<dbReference type="GeneCards" id="EIF4E"/>
<dbReference type="HGNC" id="HGNC:3287">
    <property type="gene designation" value="EIF4E"/>
</dbReference>
<dbReference type="HPA" id="ENSG00000151247">
    <property type="expression patterns" value="Low tissue specificity"/>
</dbReference>
<dbReference type="MalaCards" id="EIF4E"/>
<dbReference type="MIM" id="133440">
    <property type="type" value="gene"/>
</dbReference>
<dbReference type="MIM" id="615091">
    <property type="type" value="phenotype"/>
</dbReference>
<dbReference type="neXtProt" id="NX_P06730"/>
<dbReference type="OpenTargets" id="ENSG00000151247"/>
<dbReference type="PharmGKB" id="PA27714"/>
<dbReference type="VEuPathDB" id="HostDB:ENSG00000151247"/>
<dbReference type="GeneTree" id="ENSGT00940000154194"/>
<dbReference type="HOGENOM" id="CLU_043552_1_1_1"/>
<dbReference type="InParanoid" id="P06730"/>
<dbReference type="OMA" id="NQEIANP"/>
<dbReference type="OrthoDB" id="590761at2759"/>
<dbReference type="PAN-GO" id="P06730">
    <property type="GO annotations" value="3 GO annotations based on evolutionary models"/>
</dbReference>
<dbReference type="PhylomeDB" id="P06730"/>
<dbReference type="TreeFam" id="TF101526"/>
<dbReference type="PathwayCommons" id="P06730"/>
<dbReference type="Reactome" id="R-HSA-1169408">
    <property type="pathway name" value="ISG15 antiviral mechanism"/>
</dbReference>
<dbReference type="Reactome" id="R-HSA-156827">
    <property type="pathway name" value="L13a-mediated translational silencing of Ceruloplasmin expression"/>
</dbReference>
<dbReference type="Reactome" id="R-HSA-159227">
    <property type="pathway name" value="Transport of the SLBP independent Mature mRNA"/>
</dbReference>
<dbReference type="Reactome" id="R-HSA-159230">
    <property type="pathway name" value="Transport of the SLBP Dependant Mature mRNA"/>
</dbReference>
<dbReference type="Reactome" id="R-HSA-159231">
    <property type="pathway name" value="Transport of Mature mRNA Derived from an Intronless Transcript"/>
</dbReference>
<dbReference type="Reactome" id="R-HSA-166208">
    <property type="pathway name" value="mTORC1-mediated signalling"/>
</dbReference>
<dbReference type="Reactome" id="R-HSA-429947">
    <property type="pathway name" value="Deadenylation of mRNA"/>
</dbReference>
<dbReference type="Reactome" id="R-HSA-72649">
    <property type="pathway name" value="Translation initiation complex formation"/>
</dbReference>
<dbReference type="Reactome" id="R-HSA-72662">
    <property type="pathway name" value="Activation of the mRNA upon binding of the cap-binding complex and eIFs, and subsequent binding to 43S"/>
</dbReference>
<dbReference type="Reactome" id="R-HSA-72702">
    <property type="pathway name" value="Ribosomal scanning and start codon recognition"/>
</dbReference>
<dbReference type="Reactome" id="R-HSA-72706">
    <property type="pathway name" value="GTP hydrolysis and joining of the 60S ribosomal subunit"/>
</dbReference>
<dbReference type="Reactome" id="R-HSA-9820841">
    <property type="pathway name" value="M-decay: degradation of maternal mRNAs by maternally stored factors"/>
</dbReference>
<dbReference type="Reactome" id="R-HSA-9820865">
    <property type="pathway name" value="Z-decay: degradation of maternal mRNAs by zygotically expressed factors"/>
</dbReference>
<dbReference type="SignaLink" id="P06730"/>
<dbReference type="SIGNOR" id="P06730"/>
<dbReference type="BioGRID-ORCS" id="1977">
    <property type="hits" value="769 hits in 1137 CRISPR screens"/>
</dbReference>
<dbReference type="CD-CODE" id="232F8A39">
    <property type="entry name" value="P-body"/>
</dbReference>
<dbReference type="CD-CODE" id="DEE660B4">
    <property type="entry name" value="Stress granule"/>
</dbReference>
<dbReference type="ChiTaRS" id="EIF4E">
    <property type="organism name" value="human"/>
</dbReference>
<dbReference type="EvolutionaryTrace" id="P06730"/>
<dbReference type="GeneWiki" id="EIF4E"/>
<dbReference type="GenomeRNAi" id="1977"/>
<dbReference type="Pharos" id="P06730">
    <property type="development level" value="Tchem"/>
</dbReference>
<dbReference type="PRO" id="PR:P06730"/>
<dbReference type="Proteomes" id="UP000005640">
    <property type="component" value="Chromosome 4"/>
</dbReference>
<dbReference type="RNAct" id="P06730">
    <property type="molecule type" value="protein"/>
</dbReference>
<dbReference type="Bgee" id="ENSG00000151247">
    <property type="expression patterns" value="Expressed in sperm and 200 other cell types or tissues"/>
</dbReference>
<dbReference type="ExpressionAtlas" id="P06730">
    <property type="expression patterns" value="baseline and differential"/>
</dbReference>
<dbReference type="GO" id="GO:0033391">
    <property type="term" value="C:chromatoid body"/>
    <property type="evidence" value="ECO:0007669"/>
    <property type="project" value="Ensembl"/>
</dbReference>
<dbReference type="GO" id="GO:0005737">
    <property type="term" value="C:cytoplasm"/>
    <property type="evidence" value="ECO:0000314"/>
    <property type="project" value="AgBase"/>
</dbReference>
<dbReference type="GO" id="GO:0036464">
    <property type="term" value="C:cytoplasmic ribonucleoprotein granule"/>
    <property type="evidence" value="ECO:0000314"/>
    <property type="project" value="HPA"/>
</dbReference>
<dbReference type="GO" id="GO:0010494">
    <property type="term" value="C:cytoplasmic stress granule"/>
    <property type="evidence" value="ECO:0000314"/>
    <property type="project" value="UniProtKB"/>
</dbReference>
<dbReference type="GO" id="GO:0005829">
    <property type="term" value="C:cytosol"/>
    <property type="evidence" value="ECO:0000314"/>
    <property type="project" value="HPA"/>
</dbReference>
<dbReference type="GO" id="GO:0016281">
    <property type="term" value="C:eukaryotic translation initiation factor 4F complex"/>
    <property type="evidence" value="ECO:0000314"/>
    <property type="project" value="UniProtKB"/>
</dbReference>
<dbReference type="GO" id="GO:0070062">
    <property type="term" value="C:extracellular exosome"/>
    <property type="evidence" value="ECO:0007005"/>
    <property type="project" value="UniProtKB"/>
</dbReference>
<dbReference type="GO" id="GO:0098978">
    <property type="term" value="C:glutamatergic synapse"/>
    <property type="evidence" value="ECO:0007669"/>
    <property type="project" value="Ensembl"/>
</dbReference>
<dbReference type="GO" id="GO:0016607">
    <property type="term" value="C:nuclear speck"/>
    <property type="evidence" value="ECO:0000314"/>
    <property type="project" value="UniProtKB"/>
</dbReference>
<dbReference type="GO" id="GO:0005634">
    <property type="term" value="C:nucleus"/>
    <property type="evidence" value="ECO:0000314"/>
    <property type="project" value="UniProtKB"/>
</dbReference>
<dbReference type="GO" id="GO:0000932">
    <property type="term" value="C:P-body"/>
    <property type="evidence" value="ECO:0000314"/>
    <property type="project" value="UniProtKB"/>
</dbReference>
<dbReference type="GO" id="GO:0048471">
    <property type="term" value="C:perinuclear region of cytoplasm"/>
    <property type="evidence" value="ECO:0000314"/>
    <property type="project" value="AgBase"/>
</dbReference>
<dbReference type="GO" id="GO:0098794">
    <property type="term" value="C:postsynapse"/>
    <property type="evidence" value="ECO:0007669"/>
    <property type="project" value="Ensembl"/>
</dbReference>
<dbReference type="GO" id="GO:0016442">
    <property type="term" value="C:RISC complex"/>
    <property type="evidence" value="ECO:0000314"/>
    <property type="project" value="MGI"/>
</dbReference>
<dbReference type="GO" id="GO:0140297">
    <property type="term" value="F:DNA-binding transcription factor binding"/>
    <property type="evidence" value="ECO:0000314"/>
    <property type="project" value="AgBase"/>
</dbReference>
<dbReference type="GO" id="GO:0019899">
    <property type="term" value="F:enzyme binding"/>
    <property type="evidence" value="ECO:0000314"/>
    <property type="project" value="AgBase"/>
</dbReference>
<dbReference type="GO" id="GO:0031370">
    <property type="term" value="F:eukaryotic initiation factor 4G binding"/>
    <property type="evidence" value="ECO:0000314"/>
    <property type="project" value="AgBase"/>
</dbReference>
<dbReference type="GO" id="GO:0098808">
    <property type="term" value="F:mRNA cap binding"/>
    <property type="evidence" value="ECO:0000314"/>
    <property type="project" value="UniProtKB"/>
</dbReference>
<dbReference type="GO" id="GO:0000340">
    <property type="term" value="F:RNA 7-methylguanosine cap binding"/>
    <property type="evidence" value="ECO:0000314"/>
    <property type="project" value="UniProtKB"/>
</dbReference>
<dbReference type="GO" id="GO:0003723">
    <property type="term" value="F:RNA binding"/>
    <property type="evidence" value="ECO:0007005"/>
    <property type="project" value="UniProtKB"/>
</dbReference>
<dbReference type="GO" id="GO:0000339">
    <property type="term" value="F:RNA cap binding"/>
    <property type="evidence" value="ECO:0000304"/>
    <property type="project" value="ProtInc"/>
</dbReference>
<dbReference type="GO" id="GO:0003743">
    <property type="term" value="F:translation initiation factor activity"/>
    <property type="evidence" value="ECO:0000314"/>
    <property type="project" value="UniProtKB"/>
</dbReference>
<dbReference type="GO" id="GO:0001662">
    <property type="term" value="P:behavioral fear response"/>
    <property type="evidence" value="ECO:0007669"/>
    <property type="project" value="Ensembl"/>
</dbReference>
<dbReference type="GO" id="GO:0071549">
    <property type="term" value="P:cellular response to dexamethasone stimulus"/>
    <property type="evidence" value="ECO:0007669"/>
    <property type="project" value="Ensembl"/>
</dbReference>
<dbReference type="GO" id="GO:0000082">
    <property type="term" value="P:G1/S transition of mitotic cell cycle"/>
    <property type="evidence" value="ECO:0000315"/>
    <property type="project" value="UniProtKB"/>
</dbReference>
<dbReference type="GO" id="GO:0006406">
    <property type="term" value="P:mRNA export from nucleus"/>
    <property type="evidence" value="ECO:0000250"/>
    <property type="project" value="UniProtKB"/>
</dbReference>
<dbReference type="GO" id="GO:0045665">
    <property type="term" value="P:negative regulation of neuron differentiation"/>
    <property type="evidence" value="ECO:0007669"/>
    <property type="project" value="Ensembl"/>
</dbReference>
<dbReference type="GO" id="GO:0017148">
    <property type="term" value="P:negative regulation of translation"/>
    <property type="evidence" value="ECO:0007669"/>
    <property type="project" value="Ensembl"/>
</dbReference>
<dbReference type="GO" id="GO:0030182">
    <property type="term" value="P:neuron differentiation"/>
    <property type="evidence" value="ECO:0007669"/>
    <property type="project" value="Ensembl"/>
</dbReference>
<dbReference type="GO" id="GO:0045931">
    <property type="term" value="P:positive regulation of mitotic cell cycle"/>
    <property type="evidence" value="ECO:0000315"/>
    <property type="project" value="UniProtKB"/>
</dbReference>
<dbReference type="GO" id="GO:0006417">
    <property type="term" value="P:regulation of translation"/>
    <property type="evidence" value="ECO:0000314"/>
    <property type="project" value="UniProtKB"/>
</dbReference>
<dbReference type="GO" id="GO:0099578">
    <property type="term" value="P:regulation of translation at postsynapse, modulating synaptic transmission"/>
    <property type="evidence" value="ECO:0007669"/>
    <property type="project" value="Ensembl"/>
</dbReference>
<dbReference type="GO" id="GO:0019827">
    <property type="term" value="P:stem cell population maintenance"/>
    <property type="evidence" value="ECO:0007669"/>
    <property type="project" value="Ensembl"/>
</dbReference>
<dbReference type="GO" id="GO:0006413">
    <property type="term" value="P:translational initiation"/>
    <property type="evidence" value="ECO:0000318"/>
    <property type="project" value="GO_Central"/>
</dbReference>
<dbReference type="DisProt" id="DP02399"/>
<dbReference type="FunFam" id="3.30.760.10:FF:000002">
    <property type="entry name" value="Eukaryotic translation initiation factor 4E"/>
    <property type="match status" value="1"/>
</dbReference>
<dbReference type="Gene3D" id="3.30.760.10">
    <property type="entry name" value="RNA Cap, Translation Initiation Factor Eif4e"/>
    <property type="match status" value="1"/>
</dbReference>
<dbReference type="IDEAL" id="IID00341"/>
<dbReference type="InterPro" id="IPR023398">
    <property type="entry name" value="TIF_eIF4e-like"/>
</dbReference>
<dbReference type="InterPro" id="IPR001040">
    <property type="entry name" value="TIF_eIF_4E"/>
</dbReference>
<dbReference type="InterPro" id="IPR019770">
    <property type="entry name" value="TIF_eIF_4E_CS"/>
</dbReference>
<dbReference type="PANTHER" id="PTHR11960:SF14">
    <property type="entry name" value="EUKARYOTIC TRANSLATION INITIATION FACTOR 4E"/>
    <property type="match status" value="1"/>
</dbReference>
<dbReference type="PANTHER" id="PTHR11960">
    <property type="entry name" value="EUKARYOTIC TRANSLATION INITIATION FACTOR 4E RELATED"/>
    <property type="match status" value="1"/>
</dbReference>
<dbReference type="Pfam" id="PF01652">
    <property type="entry name" value="IF4E"/>
    <property type="match status" value="1"/>
</dbReference>
<dbReference type="SUPFAM" id="SSF55418">
    <property type="entry name" value="eIF4e-like"/>
    <property type="match status" value="1"/>
</dbReference>
<dbReference type="PROSITE" id="PS00813">
    <property type="entry name" value="IF4E"/>
    <property type="match status" value="1"/>
</dbReference>
<protein>
    <recommendedName>
        <fullName evidence="62">Eukaryotic translation initiation factor 4E</fullName>
        <shortName>eIF-4E</shortName>
        <shortName evidence="63">eIF4E</shortName>
    </recommendedName>
    <alternativeName>
        <fullName>eIF-4F 25 kDa subunit</fullName>
    </alternativeName>
    <alternativeName>
        <fullName evidence="64">mRNA cap-binding protein</fullName>
    </alternativeName>
</protein>
<keyword id="KW-0002">3D-structure</keyword>
<keyword id="KW-0007">Acetylation</keyword>
<keyword id="KW-0025">Alternative splicing</keyword>
<keyword id="KW-1269">Autism</keyword>
<keyword id="KW-1268">Autism spectrum disorder</keyword>
<keyword id="KW-0160">Chromosomal rearrangement</keyword>
<keyword id="KW-0963">Cytoplasm</keyword>
<keyword id="KW-0903">Direct protein sequencing</keyword>
<keyword id="KW-0945">Host-virus interaction</keyword>
<keyword id="KW-0396">Initiation factor</keyword>
<keyword id="KW-0509">mRNA transport</keyword>
<keyword id="KW-0539">Nucleus</keyword>
<keyword id="KW-0597">Phosphoprotein</keyword>
<keyword id="KW-0648">Protein biosynthesis</keyword>
<keyword id="KW-1267">Proteomics identification</keyword>
<keyword id="KW-1185">Reference proteome</keyword>
<keyword id="KW-0694">RNA-binding</keyword>
<keyword id="KW-0810">Translation regulation</keyword>
<keyword id="KW-0813">Transport</keyword>
<gene>
    <name evidence="68" type="primary">EIF4E</name>
    <name type="synonym">EIF4EL1</name>
    <name type="synonym">EIF4F</name>
</gene>
<organism>
    <name type="scientific">Homo sapiens</name>
    <name type="common">Human</name>
    <dbReference type="NCBI Taxonomy" id="9606"/>
    <lineage>
        <taxon>Eukaryota</taxon>
        <taxon>Metazoa</taxon>
        <taxon>Chordata</taxon>
        <taxon>Craniata</taxon>
        <taxon>Vertebrata</taxon>
        <taxon>Euteleostomi</taxon>
        <taxon>Mammalia</taxon>
        <taxon>Eutheria</taxon>
        <taxon>Euarchontoglires</taxon>
        <taxon>Primates</taxon>
        <taxon>Haplorrhini</taxon>
        <taxon>Catarrhini</taxon>
        <taxon>Hominidae</taxon>
        <taxon>Homo</taxon>
    </lineage>
</organism>
<feature type="initiator methionine" description="Removed" evidence="24 70">
    <location>
        <position position="1"/>
    </location>
</feature>
<feature type="chain" id="PRO_0000193634" description="Eukaryotic translation initiation factor 4E">
    <location>
        <begin position="2"/>
        <end position="217"/>
    </location>
</feature>
<feature type="region of interest" description="Disordered" evidence="3">
    <location>
        <begin position="1"/>
        <end position="30"/>
    </location>
</feature>
<feature type="region of interest" description="EIF4EBP1/2/3 binding" evidence="21">
    <location>
        <begin position="37"/>
        <end position="40"/>
    </location>
</feature>
<feature type="region of interest" description="EIF4EBP1/2/3 binding" evidence="21">
    <location>
        <begin position="73"/>
        <end position="77"/>
    </location>
</feature>
<feature type="region of interest" description="EIF4EBP1/2/3 binding" evidence="21">
    <location>
        <begin position="132"/>
        <end position="139"/>
    </location>
</feature>
<feature type="binding site" evidence="12 16 21">
    <location>
        <begin position="56"/>
        <end position="57"/>
    </location>
    <ligand>
        <name>mRNA</name>
        <dbReference type="ChEBI" id="CHEBI:33699"/>
    </ligand>
    <ligandPart>
        <name>N(7)-methylguanosine 5'-triphosphate group</name>
        <dbReference type="ChEBI" id="CHEBI:74429"/>
        <note>m7GTP residue in mRNA cap</note>
    </ligandPart>
</feature>
<feature type="binding site" evidence="12 16 21">
    <location>
        <begin position="102"/>
        <end position="103"/>
    </location>
    <ligand>
        <name>mRNA</name>
        <dbReference type="ChEBI" id="CHEBI:33699"/>
    </ligand>
    <ligandPart>
        <name>N(7)-methylguanosine 5'-triphosphate group</name>
        <dbReference type="ChEBI" id="CHEBI:74429"/>
        <note>m7GTP residue in mRNA cap</note>
    </ligandPart>
</feature>
<feature type="binding site" evidence="12 16 21">
    <location>
        <begin position="157"/>
        <end position="162"/>
    </location>
    <ligand>
        <name>mRNA</name>
        <dbReference type="ChEBI" id="CHEBI:33699"/>
    </ligand>
    <ligandPart>
        <name>N(7)-methylguanosine 5'-triphosphate group</name>
        <dbReference type="ChEBI" id="CHEBI:74429"/>
        <note>m7GTP residue in mRNA cap</note>
    </ligandPart>
</feature>
<feature type="binding site" evidence="12 16 21">
    <location>
        <begin position="205"/>
        <end position="207"/>
    </location>
    <ligand>
        <name>mRNA</name>
        <dbReference type="ChEBI" id="CHEBI:33699"/>
    </ligand>
    <ligandPart>
        <name>N(7)-methylguanosine 5'-triphosphate group</name>
        <dbReference type="ChEBI" id="CHEBI:74429"/>
        <note>m7GTP residue in mRNA cap</note>
    </ligandPart>
</feature>
<feature type="site" description="(Microbial infection) Interaction with potato virus Y VPg" evidence="52">
    <location>
        <position position="159"/>
    </location>
</feature>
<feature type="modified residue" description="N-acetylalanine" evidence="70">
    <location>
        <position position="2"/>
    </location>
</feature>
<feature type="modified residue" description="Phosphothreonine" evidence="71">
    <location>
        <position position="22"/>
    </location>
</feature>
<feature type="modified residue" description="Phosphoserine; by PKC and MKNK2" evidence="6 43 55 56">
    <location>
        <position position="209"/>
    </location>
</feature>
<feature type="splice variant" id="VSP_043591" description="In isoform 3." evidence="60">
    <original>MATVEP</original>
    <variation>MLDLTSRGQVGTSRRMAEAACSAHFL</variation>
    <location>
        <begin position="1"/>
        <end position="6"/>
    </location>
</feature>
<feature type="splice variant" id="VSP_042014" description="In isoform 2." evidence="61">
    <original>T</original>
    <variation>TRWDLAMLPRLVSNFWPQVILPLQPPKVLELQ</variation>
    <location>
        <position position="133"/>
    </location>
</feature>
<feature type="mutagenesis site" description="No effect on phosphorylation level nor incorporation into eIF4F complex." evidence="54 57">
    <original>S</original>
    <variation>A</variation>
    <variation>D</variation>
    <location>
        <position position="53"/>
    </location>
</feature>
<feature type="mutagenesis site" description="Does not affect ability to rescue growth of yeast lacking a functional EIF4E/CDC33 gene." evidence="11">
    <original>S</original>
    <variation>A</variation>
    <location>
        <position position="53"/>
    </location>
</feature>
<feature type="mutagenesis site" description="Impairs mRNA nuclear export. Reduces affinity for ribavirin." evidence="18 36">
    <original>W</original>
    <variation>A</variation>
    <location>
        <position position="56"/>
    </location>
</feature>
<feature type="mutagenesis site" description="Abolishes binding to EIF4EBP1. Impairs interaction with DDX3X. Does not impair mRNA nuclear export. Does not affect affinity for ribavirin." evidence="18 26 35 36">
    <original>W</original>
    <variation>A</variation>
    <location>
        <position position="73"/>
    </location>
</feature>
<feature type="mutagenesis site" description="Decrease in mRNA cap binding; when associated with A-105." evidence="23">
    <original>W</original>
    <variation>L</variation>
    <location>
        <position position="102"/>
    </location>
</feature>
<feature type="mutagenesis site" description="No effect." evidence="23">
    <original>E</original>
    <variation>A</variation>
    <location>
        <position position="103"/>
    </location>
</feature>
<feature type="mutagenesis site" description="No effect." evidence="23">
    <original>D</original>
    <variation>A</variation>
    <location>
        <position position="104"/>
    </location>
</feature>
<feature type="mutagenesis site" description="Decrease in mRNA cap binding; when associated with L-102." evidence="23">
    <original>E</original>
    <variation>A</variation>
    <location>
        <position position="105"/>
    </location>
</feature>
<feature type="mutagenesis site" description="Higher affinity for EIF4G1." evidence="24">
    <original>K</original>
    <variation>A</variation>
    <location>
        <position position="119"/>
    </location>
</feature>
<feature type="mutagenesis site" description="Abolishes resistance to cellular stress and DNA-damaging agents. Does not affect ability to rescue growth of yeast lacking a functional EIF4E/CDC33 gene." evidence="11 43">
    <original>S</original>
    <variation>A</variation>
    <location>
        <position position="209"/>
    </location>
</feature>
<feature type="mutagenesis site" description="Phosphomimetic mutant; confers resistance to cellular stress and DNA-damaging agents. Does not affect ability to rescue growth of yeast lacking a functional EIF4E/CDC33 gene." evidence="11 43">
    <original>S</original>
    <variation>D</variation>
    <location>
        <position position="209"/>
    </location>
</feature>
<feature type="sequence conflict" description="In Ref. 5; AAH12611." evidence="65" ref="5">
    <original>D</original>
    <variation>N</variation>
    <location>
        <position position="127"/>
    </location>
</feature>
<feature type="helix" evidence="76">
    <location>
        <begin position="31"/>
        <end position="33"/>
    </location>
</feature>
<feature type="strand" evidence="74">
    <location>
        <begin position="38"/>
        <end position="49"/>
    </location>
</feature>
<feature type="strand" evidence="77">
    <location>
        <begin position="50"/>
        <end position="52"/>
    </location>
</feature>
<feature type="helix" evidence="74">
    <location>
        <begin position="56"/>
        <end position="59"/>
    </location>
</feature>
<feature type="strand" evidence="74">
    <location>
        <begin position="60"/>
        <end position="68"/>
    </location>
</feature>
<feature type="helix" evidence="74">
    <location>
        <begin position="69"/>
        <end position="82"/>
    </location>
</feature>
<feature type="strand" evidence="74">
    <location>
        <begin position="89"/>
        <end position="95"/>
    </location>
</feature>
<feature type="strand" evidence="72">
    <location>
        <begin position="100"/>
        <end position="103"/>
    </location>
</feature>
<feature type="turn" evidence="74">
    <location>
        <begin position="105"/>
        <end position="109"/>
    </location>
</feature>
<feature type="strand" evidence="74">
    <location>
        <begin position="111"/>
        <end position="116"/>
    </location>
</feature>
<feature type="helix" evidence="74">
    <location>
        <begin position="119"/>
        <end position="122"/>
    </location>
</feature>
<feature type="turn" evidence="74">
    <location>
        <begin position="123"/>
        <end position="125"/>
    </location>
</feature>
<feature type="helix" evidence="74">
    <location>
        <begin position="126"/>
        <end position="138"/>
    </location>
</feature>
<feature type="turn" evidence="74">
    <location>
        <begin position="139"/>
        <end position="142"/>
    </location>
</feature>
<feature type="helix" evidence="74">
    <location>
        <begin position="143"/>
        <end position="148"/>
    </location>
</feature>
<feature type="strand" evidence="74">
    <location>
        <begin position="149"/>
        <end position="155"/>
    </location>
</feature>
<feature type="strand" evidence="74">
    <location>
        <begin position="162"/>
        <end position="168"/>
    </location>
</feature>
<feature type="helix" evidence="74">
    <location>
        <begin position="173"/>
        <end position="187"/>
    </location>
</feature>
<feature type="strand" evidence="75">
    <location>
        <begin position="191"/>
        <end position="193"/>
    </location>
</feature>
<feature type="strand" evidence="74">
    <location>
        <begin position="196"/>
        <end position="199"/>
    </location>
</feature>
<feature type="helix" evidence="74">
    <location>
        <begin position="200"/>
        <end position="204"/>
    </location>
</feature>
<feature type="strand" evidence="73">
    <location>
        <begin position="205"/>
        <end position="207"/>
    </location>
</feature>
<feature type="turn" evidence="74">
    <location>
        <begin position="208"/>
        <end position="210"/>
    </location>
</feature>
<feature type="strand" evidence="74">
    <location>
        <begin position="214"/>
        <end position="216"/>
    </location>
</feature>
<evidence type="ECO:0000250" key="1">
    <source>
        <dbReference type="UniProtKB" id="P63073"/>
    </source>
</evidence>
<evidence type="ECO:0000250" key="2">
    <source>
        <dbReference type="UniProtKB" id="P63074"/>
    </source>
</evidence>
<evidence type="ECO:0000256" key="3">
    <source>
        <dbReference type="SAM" id="MobiDB-lite"/>
    </source>
</evidence>
<evidence type="ECO:0000269" key="4">
    <source>
    </source>
</evidence>
<evidence type="ECO:0000269" key="5">
    <source>
    </source>
</evidence>
<evidence type="ECO:0000269" key="6">
    <source>
    </source>
</evidence>
<evidence type="ECO:0000269" key="7">
    <source>
    </source>
</evidence>
<evidence type="ECO:0000269" key="8">
    <source>
    </source>
</evidence>
<evidence type="ECO:0000269" key="9">
    <source>
    </source>
</evidence>
<evidence type="ECO:0000269" key="10">
    <source>
    </source>
</evidence>
<evidence type="ECO:0000269" key="11">
    <source>
    </source>
</evidence>
<evidence type="ECO:0000269" key="12">
    <source>
    </source>
</evidence>
<evidence type="ECO:0000269" key="13">
    <source>
    </source>
</evidence>
<evidence type="ECO:0000269" key="14">
    <source>
    </source>
</evidence>
<evidence type="ECO:0000269" key="15">
    <source>
    </source>
</evidence>
<evidence type="ECO:0000269" key="16">
    <source>
    </source>
</evidence>
<evidence type="ECO:0000269" key="17">
    <source>
    </source>
</evidence>
<evidence type="ECO:0000269" key="18">
    <source>
    </source>
</evidence>
<evidence type="ECO:0000269" key="19">
    <source>
    </source>
</evidence>
<evidence type="ECO:0000269" key="20">
    <source>
    </source>
</evidence>
<evidence type="ECO:0000269" key="21">
    <source>
    </source>
</evidence>
<evidence type="ECO:0000269" key="22">
    <source>
    </source>
</evidence>
<evidence type="ECO:0000269" key="23">
    <source>
    </source>
</evidence>
<evidence type="ECO:0000269" key="24">
    <source>
    </source>
</evidence>
<evidence type="ECO:0000269" key="25">
    <source>
    </source>
</evidence>
<evidence type="ECO:0000269" key="26">
    <source>
    </source>
</evidence>
<evidence type="ECO:0000269" key="27">
    <source>
    </source>
</evidence>
<evidence type="ECO:0000269" key="28">
    <source>
    </source>
</evidence>
<evidence type="ECO:0000269" key="29">
    <source>
    </source>
</evidence>
<evidence type="ECO:0000269" key="30">
    <source>
    </source>
</evidence>
<evidence type="ECO:0000269" key="31">
    <source>
    </source>
</evidence>
<evidence type="ECO:0000269" key="32">
    <source>
    </source>
</evidence>
<evidence type="ECO:0000269" key="33">
    <source>
    </source>
</evidence>
<evidence type="ECO:0000269" key="34">
    <source>
    </source>
</evidence>
<evidence type="ECO:0000269" key="35">
    <source>
    </source>
</evidence>
<evidence type="ECO:0000269" key="36">
    <source>
    </source>
</evidence>
<evidence type="ECO:0000269" key="37">
    <source>
    </source>
</evidence>
<evidence type="ECO:0000269" key="38">
    <source>
    </source>
</evidence>
<evidence type="ECO:0000269" key="39">
    <source>
    </source>
</evidence>
<evidence type="ECO:0000269" key="40">
    <source>
    </source>
</evidence>
<evidence type="ECO:0000269" key="41">
    <source>
    </source>
</evidence>
<evidence type="ECO:0000269" key="42">
    <source>
    </source>
</evidence>
<evidence type="ECO:0000269" key="43">
    <source>
    </source>
</evidence>
<evidence type="ECO:0000269" key="44">
    <source>
    </source>
</evidence>
<evidence type="ECO:0000269" key="45">
    <source>
    </source>
</evidence>
<evidence type="ECO:0000269" key="46">
    <source>
    </source>
</evidence>
<evidence type="ECO:0000269" key="47">
    <source>
    </source>
</evidence>
<evidence type="ECO:0000269" key="48">
    <source>
    </source>
</evidence>
<evidence type="ECO:0000269" key="49">
    <source>
    </source>
</evidence>
<evidence type="ECO:0000269" key="50">
    <source>
    </source>
</evidence>
<evidence type="ECO:0000269" key="51">
    <source>
    </source>
</evidence>
<evidence type="ECO:0000269" key="52">
    <source>
    </source>
</evidence>
<evidence type="ECO:0000269" key="53">
    <source>
    </source>
</evidence>
<evidence type="ECO:0000269" key="54">
    <source>
    </source>
</evidence>
<evidence type="ECO:0000269" key="55">
    <source>
    </source>
</evidence>
<evidence type="ECO:0000269" key="56">
    <source>
    </source>
</evidence>
<evidence type="ECO:0000269" key="57">
    <source>
    </source>
</evidence>
<evidence type="ECO:0000269" key="58">
    <source>
    </source>
</evidence>
<evidence type="ECO:0000269" key="59">
    <source>
    </source>
</evidence>
<evidence type="ECO:0000303" key="60">
    <source>
    </source>
</evidence>
<evidence type="ECO:0000303" key="61">
    <source>
    </source>
</evidence>
<evidence type="ECO:0000303" key="62">
    <source>
    </source>
</evidence>
<evidence type="ECO:0000303" key="63">
    <source>
    </source>
</evidence>
<evidence type="ECO:0000303" key="64">
    <source>
    </source>
</evidence>
<evidence type="ECO:0000305" key="65"/>
<evidence type="ECO:0000305" key="66">
    <source>
    </source>
</evidence>
<evidence type="ECO:0000305" key="67">
    <source>
    </source>
</evidence>
<evidence type="ECO:0000312" key="68">
    <source>
        <dbReference type="HGNC" id="HGNC:3287"/>
    </source>
</evidence>
<evidence type="ECO:0007744" key="69">
    <source>
        <dbReference type="PDB" id="4UED"/>
    </source>
</evidence>
<evidence type="ECO:0007744" key="70">
    <source>
    </source>
</evidence>
<evidence type="ECO:0007744" key="71">
    <source>
    </source>
</evidence>
<evidence type="ECO:0007829" key="72">
    <source>
        <dbReference type="PDB" id="2GPQ"/>
    </source>
</evidence>
<evidence type="ECO:0007829" key="73">
    <source>
        <dbReference type="PDB" id="3AM7"/>
    </source>
</evidence>
<evidence type="ECO:0007829" key="74">
    <source>
        <dbReference type="PDB" id="4TPW"/>
    </source>
</evidence>
<evidence type="ECO:0007829" key="75">
    <source>
        <dbReference type="PDB" id="4TQC"/>
    </source>
</evidence>
<evidence type="ECO:0007829" key="76">
    <source>
        <dbReference type="PDB" id="5EI3"/>
    </source>
</evidence>
<evidence type="ECO:0007829" key="77">
    <source>
        <dbReference type="PDB" id="5ZJZ"/>
    </source>
</evidence>